<evidence type="ECO:0000255" key="1"/>
<evidence type="ECO:0000255" key="2">
    <source>
        <dbReference type="PROSITE-ProRule" id="PRU00269"/>
    </source>
</evidence>
<evidence type="ECO:0000255" key="3">
    <source>
        <dbReference type="PROSITE-ProRule" id="PRU00534"/>
    </source>
</evidence>
<evidence type="ECO:0000255" key="4">
    <source>
        <dbReference type="PROSITE-ProRule" id="PRU00535"/>
    </source>
</evidence>
<evidence type="ECO:0000256" key="5">
    <source>
        <dbReference type="SAM" id="MobiDB-lite"/>
    </source>
</evidence>
<evidence type="ECO:0000269" key="6">
    <source>
    </source>
</evidence>
<evidence type="ECO:0000269" key="7">
    <source>
    </source>
</evidence>
<evidence type="ECO:0000269" key="8">
    <source>
    </source>
</evidence>
<evidence type="ECO:0000269" key="9">
    <source>
    </source>
</evidence>
<evidence type="ECO:0000269" key="10">
    <source>
    </source>
</evidence>
<evidence type="ECO:0000269" key="11">
    <source>
    </source>
</evidence>
<evidence type="ECO:0000269" key="12">
    <source>
    </source>
</evidence>
<evidence type="ECO:0000269" key="13">
    <source>
    </source>
</evidence>
<evidence type="ECO:0000269" key="14">
    <source>
    </source>
</evidence>
<evidence type="ECO:0000269" key="15">
    <source>
    </source>
</evidence>
<evidence type="ECO:0000269" key="16">
    <source>
    </source>
</evidence>
<evidence type="ECO:0000269" key="17">
    <source>
    </source>
</evidence>
<evidence type="ECO:0000269" key="18">
    <source>
    </source>
</evidence>
<evidence type="ECO:0000269" key="19">
    <source>
    </source>
</evidence>
<evidence type="ECO:0000269" key="20">
    <source>
    </source>
</evidence>
<evidence type="ECO:0000269" key="21">
    <source>
    </source>
</evidence>
<evidence type="ECO:0000269" key="22">
    <source>
    </source>
</evidence>
<evidence type="ECO:0000269" key="23">
    <source>
    </source>
</evidence>
<evidence type="ECO:0000269" key="24">
    <source>
    </source>
</evidence>
<evidence type="ECO:0000269" key="25">
    <source>
    </source>
</evidence>
<evidence type="ECO:0000269" key="26">
    <source>
    </source>
</evidence>
<evidence type="ECO:0000303" key="27">
    <source>
    </source>
</evidence>
<evidence type="ECO:0000303" key="28">
    <source>
    </source>
</evidence>
<evidence type="ECO:0000305" key="29"/>
<evidence type="ECO:0000305" key="30">
    <source>
    </source>
</evidence>
<evidence type="ECO:0000312" key="31">
    <source>
        <dbReference type="SGD" id="S000001141"/>
    </source>
</evidence>
<evidence type="ECO:0007744" key="32">
    <source>
        <dbReference type="PDB" id="5OJS"/>
    </source>
</evidence>
<evidence type="ECO:0007744" key="33">
    <source>
        <dbReference type="PDB" id="5Y81"/>
    </source>
</evidence>
<evidence type="ECO:0007744" key="34">
    <source>
        <dbReference type="PDB" id="6IG9"/>
    </source>
</evidence>
<evidence type="ECO:0007744" key="35">
    <source>
        <dbReference type="PDB" id="6T9I"/>
    </source>
</evidence>
<evidence type="ECO:0007744" key="36">
    <source>
        <dbReference type="PDB" id="6T9J"/>
    </source>
</evidence>
<evidence type="ECO:0007744" key="37">
    <source>
        <dbReference type="PDB" id="7VVY"/>
    </source>
</evidence>
<evidence type="ECO:0007744" key="38">
    <source>
        <dbReference type="PDB" id="7VVZ"/>
    </source>
</evidence>
<evidence type="ECO:0007744" key="39">
    <source>
        <dbReference type="PDB" id="7YFN"/>
    </source>
</evidence>
<evidence type="ECO:0007744" key="40">
    <source>
        <dbReference type="PDB" id="7YFP"/>
    </source>
</evidence>
<evidence type="ECO:0007744" key="41">
    <source>
    </source>
</evidence>
<evidence type="ECO:0007744" key="42">
    <source>
    </source>
</evidence>
<evidence type="ECO:0007744" key="43">
    <source>
    </source>
</evidence>
<evidence type="ECO:0007829" key="44">
    <source>
        <dbReference type="PDB" id="6T9J"/>
    </source>
</evidence>
<evidence type="ECO:0007829" key="45">
    <source>
        <dbReference type="PDB" id="7VVY"/>
    </source>
</evidence>
<evidence type="ECO:0007829" key="46">
    <source>
        <dbReference type="PDB" id="8ESC"/>
    </source>
</evidence>
<comment type="function">
    <text evidence="6 7 8 9 10 11 12 14 17 18 22 23">Essential scaffold subunit of the transcription coactivator SAGA complex. SAGA acts as a general cofactor required for essentially all RNA polymerase II transcription (PubMed:10864329, PubMed:25216679, PubMed:28918903). At the promoters, SAGA is required for transcription pre-initiation complex (PIC) recruitment. It influences RNA polymerase II transcriptional activity through different activities such as TBP interaction (via core/TAF module) and promoter selectivity, interaction with transcription activators (via Tra1/SPT module), and chromatin modification through histone acetylation (via HAT module) and deubiquitination (via DUB module) (PubMed:11423663). SAGA preferentially acetylates histones H3 (to form H3K9ac, H3K14ac, H3K18ac and H3K23ac) and H2B and deubiquitinates histone H2B (PubMed:10026213). SAGA interacts with DNA via upstream activating sequences (UASs) (PubMed:28918903, PubMed:36198799). Also identified in a modified version of SAGA named SALSA or SLIK (PubMed:12186975, PubMed:12446794). The cleavage of SPT7 and the absence of the SPT8 subunit in SLIK neither drive any major conformational differences in its structure compared with SAGA, nor significantly affect HAT, DUB, or DNA-binding activities (PubMed:33864814). Component of the NuA4 histone H4/H2A acetyltransferase involved in transcription and DNA repair (PubMed:10487762, PubMed:10911987, PubMed:16135807).</text>
</comment>
<comment type="subunit">
    <text evidence="7 11 12 13 17 19 20 21 22 23 24 25 26">Component of the 1.8 MDa SAGA (Spt-Ada-Gcn5 acetyltransferase) complex, which is composed of 19 subunits TRA1, SPT7, TAF5, NGG1/ADA3, SGF73, SPT20/ADA5, SPT8, TAF12, TAF6, HFI1/ADA1, UBP8, GCN5, ADA2, SPT3, SGF29, TAF10, TAF9, SGF11 and SUS1 (PubMed:31069110, PubMed:31969703, PubMed:9885573). The SAGA complex is composed of 4 modules, namely the HAT (histone acetyltransferase) module (GCN5, ADA2, NGG1/ADA3 and SGF29), the DUB (deubiquitinating) module (UBP8, SGF11, SGF73 and SUS1), the core or TAF (TBP-associated factor) module (TAF5, TAF6, TAF9, TAF10 and TAF12), and the Tra1 or SPT (Suppressor of Ty) module (TRA1, HFI1/ADA1, SPT3, SPT7, SPT8 and SPT20/ADA5). The Tra1/SPT module binds activators, the core module recruits TBP (TATA-binding protein), the HAT module contains the histone H3 acetyltransferase GCN5, and the DUB module comprises the histone H2B deubiquitinase UBP8 (PubMed:25216679, PubMed:31969703). Also identified in an altered form of SAGA, named SALSA (SAGA altered, Spt8 absent) or SLIK (SAGA-like) complex, which contains a C-terminal truncated form of SPT7 and is missing SPT8 (PubMed:12186975, PubMed:12446794, PubMed:15647753). However, it has been shown that the SAGA and SAGA-like SALSA/SLIK transcriptional coactivators are structurally and biochemically equivalent (PubMed:33864814). Component of the NuA4 acetyltransferase complex, which consists of the catalytic subunit ESA1 and the 12 non-catalytic subunits ACT1, ARP4, EAF1/VID21, SWC4/EAF2, EAF3, EAF5, EAF6, EAF7, EPL1, TRA1, YAF9 and YNG2. TRA1 is the scaffold subunit for binding to a variety of transcription activators or transcription factors to recruit NuA4 for targeted gene activation (PubMed:10487762, PubMed:29559617, PubMed:36198799, PubMed:36417436). Identified in the Ada.spt complex with NGG1/ADA3 and SPT7 (PubMed:9756893).</text>
</comment>
<comment type="interaction">
    <interactant intactId="EBI-24638">
        <id>P38811</id>
    </interactant>
    <interactant intactId="EBI-2186">
        <id>Q02336</id>
        <label>ADA2</label>
    </interactant>
    <organismsDiffer>false</organismsDiffer>
    <experiments>27</experiments>
</comment>
<comment type="interaction">
    <interactant intactId="EBI-24638">
        <id>P38811</id>
    </interactant>
    <interactant intactId="EBI-35867">
        <id>Q06337</id>
        <label>EAF1</label>
    </interactant>
    <organismsDiffer>false</organismsDiffer>
    <experiments>2</experiments>
</comment>
<comment type="interaction">
    <interactant intactId="EBI-24638">
        <id>P38811</id>
    </interactant>
    <interactant intactId="EBI-6648">
        <id>Q08649</id>
        <label>ESA1</label>
    </interactant>
    <organismsDiffer>false</organismsDiffer>
    <experiments>11</experiments>
</comment>
<comment type="interaction">
    <interactant intactId="EBI-24638">
        <id>P38811</id>
    </interactant>
    <interactant intactId="EBI-8287">
        <id>Q12060</id>
        <label>HFI1</label>
    </interactant>
    <organismsDiffer>false</organismsDiffer>
    <experiments>9</experiments>
</comment>
<comment type="interaction">
    <interactant intactId="EBI-24638">
        <id>P38811</id>
    </interactant>
    <interactant intactId="EBI-2192">
        <id>P32494</id>
        <label>NGG1</label>
    </interactant>
    <organismsDiffer>false</organismsDiffer>
    <experiments>4</experiments>
</comment>
<comment type="interaction">
    <interactant intactId="EBI-24638">
        <id>P38811</id>
    </interactant>
    <interactant intactId="EBI-17958">
        <id>P35177</id>
        <label>SPT7</label>
    </interactant>
    <organismsDiffer>false</organismsDiffer>
    <experiments>11</experiments>
</comment>
<comment type="interaction">
    <interactant intactId="EBI-24638">
        <id>P38811</id>
    </interactant>
    <interactant intactId="EBI-1251050">
        <id>Q6WNK7</id>
        <label>SUS1</label>
    </interactant>
    <organismsDiffer>false</organismsDiffer>
    <experiments>6</experiments>
</comment>
<comment type="subcellular location">
    <subcellularLocation>
        <location evidence="15">Nucleus</location>
    </subcellularLocation>
</comment>
<comment type="domain">
    <text evidence="10">The C-terminal domain (2233-2836) is essential for its ability to interact with activators.</text>
</comment>
<comment type="domain">
    <text evidence="16">The FATC domain and precise positioning of the C-terminal carboxyl group are required for stability and function of the protein.</text>
</comment>
<comment type="miscellaneous">
    <text>Although strongly related to the PI3/PI4-kinase family, it lacks the typical motifs that constitute the catalytic site of PI3/PI4-kinase proteins, suggesting that it may lack such activity.</text>
</comment>
<comment type="similarity">
    <text evidence="29">Belongs to the PI3/PI4-kinase family. TRA1 subfamily.</text>
</comment>
<name>TRA1_YEAST</name>
<proteinExistence type="evidence at protein level"/>
<accession>P38811</accession>
<accession>D3DL49</accession>
<reference key="1">
    <citation type="journal article" date="1994" name="Science">
        <title>Complete nucleotide sequence of Saccharomyces cerevisiae chromosome VIII.</title>
        <authorList>
            <person name="Johnston M."/>
            <person name="Andrews S."/>
            <person name="Brinkman R."/>
            <person name="Cooper J."/>
            <person name="Ding H."/>
            <person name="Dover J."/>
            <person name="Du Z."/>
            <person name="Favello A."/>
            <person name="Fulton L."/>
            <person name="Gattung S."/>
            <person name="Geisel C."/>
            <person name="Kirsten J."/>
            <person name="Kucaba T."/>
            <person name="Hillier L.W."/>
            <person name="Jier M."/>
            <person name="Johnston L."/>
            <person name="Langston Y."/>
            <person name="Latreille P."/>
            <person name="Louis E.J."/>
            <person name="Macri C."/>
            <person name="Mardis E."/>
            <person name="Menezes S."/>
            <person name="Mouser L."/>
            <person name="Nhan M."/>
            <person name="Rifkin L."/>
            <person name="Riles L."/>
            <person name="St Peter H."/>
            <person name="Trevaskis E."/>
            <person name="Vaughan K."/>
            <person name="Vignati D."/>
            <person name="Wilcox L."/>
            <person name="Wohldman P."/>
            <person name="Waterston R."/>
            <person name="Wilson R."/>
            <person name="Vaudin M."/>
        </authorList>
    </citation>
    <scope>NUCLEOTIDE SEQUENCE [LARGE SCALE GENOMIC DNA]</scope>
    <source>
        <strain>ATCC 204508 / S288c</strain>
    </source>
</reference>
<reference key="2">
    <citation type="journal article" date="2014" name="G3 (Bethesda)">
        <title>The reference genome sequence of Saccharomyces cerevisiae: Then and now.</title>
        <authorList>
            <person name="Engel S.R."/>
            <person name="Dietrich F.S."/>
            <person name="Fisk D.G."/>
            <person name="Binkley G."/>
            <person name="Balakrishnan R."/>
            <person name="Costanzo M.C."/>
            <person name="Dwight S.S."/>
            <person name="Hitz B.C."/>
            <person name="Karra K."/>
            <person name="Nash R.S."/>
            <person name="Weng S."/>
            <person name="Wong E.D."/>
            <person name="Lloyd P."/>
            <person name="Skrzypek M.S."/>
            <person name="Miyasato S.R."/>
            <person name="Simison M."/>
            <person name="Cherry J.M."/>
        </authorList>
    </citation>
    <scope>GENOME REANNOTATION</scope>
    <source>
        <strain>ATCC 204508 / S288c</strain>
    </source>
</reference>
<reference key="3">
    <citation type="journal article" date="1998" name="Mol. Cell">
        <title>The ATM-related cofactor Tra1 is a component of the purified SAGA complex.</title>
        <authorList>
            <person name="Grant P.A."/>
            <person name="Schieltz D."/>
            <person name="Pray-Grant M.G."/>
            <person name="Yates J.R. III"/>
            <person name="Workman J.L."/>
        </authorList>
    </citation>
    <scope>PROTEIN SEQUENCE OF 149-164; 353-360; 438-445; 603-614; 751-760; 1060-1070; 1124-1134; 1311-1324; 1399-1412; 1451-1464; 1643-1658; 2197-2208; 2389-2399; 2401-2425; 2536-2550; 2601-2612; 2703-2713; 2797-2807; 3239-3247; 3440-3456; 3479-3492 AND 3681-3689</scope>
    <scope>IDENTIFICATION IN A SAGA COMPLEX WITH SPT2; SPT7; SPT8; SPT20; HFI1; ADA2; ADA3 AND GCN5</scope>
</reference>
<reference key="4">
    <citation type="journal article" date="1998" name="J. Biol. Chem.">
        <title>Tra1p is a component of the yeast Ada.Spt transcriptional regulatory complexes.</title>
        <authorList>
            <person name="Saleh A."/>
            <person name="Schieltz D."/>
            <person name="Ting N."/>
            <person name="McMahon S.B."/>
            <person name="Litchfield D.W."/>
            <person name="Yates J.R. III"/>
            <person name="Lees-Miller S.P."/>
            <person name="Cole M.D."/>
            <person name="Brandl C.J."/>
        </authorList>
    </citation>
    <scope>IDENTIFICATION IN A COMPLEX WITH ADA3 AND SPT7</scope>
</reference>
<reference key="5">
    <citation type="journal article" date="1999" name="EMBO J.">
        <title>NuA4, an essential transcription adaptor/histone H4 acetyltransferase complex containing Esa1p and the ATM-related cofactor Tra1p.</title>
        <authorList>
            <person name="Allard S."/>
            <person name="Utley R.T."/>
            <person name="Savard J."/>
            <person name="Clarke A.S."/>
            <person name="Grant P.A."/>
            <person name="Brandl C.J."/>
            <person name="Pillus L."/>
            <person name="Workman J.L."/>
            <person name="Cote J."/>
        </authorList>
    </citation>
    <scope>IDENTIFICATION IN A NUA4 COMPLEX WITH ESA1</scope>
</reference>
<reference key="6">
    <citation type="journal article" date="1999" name="J. Biol. Chem.">
        <title>Expanded lysine acetylation specificity of Gcn5 in native complexes.</title>
        <authorList>
            <person name="Grant P.A."/>
            <person name="Eberharter A."/>
            <person name="John S."/>
            <person name="Cook R.G."/>
            <person name="Turner B.M."/>
            <person name="Workman J.L."/>
        </authorList>
    </citation>
    <scope>FUNCTION IN HISTONE ACETYLATION AT THE SAGA COMPLEX</scope>
</reference>
<reference key="7">
    <citation type="journal article" date="2000" name="Mol. Cell">
        <title>Multiple links between the NuA4 histone acetyltransferase complex and epigenetic control of transcription.</title>
        <authorList>
            <person name="Galarneau L."/>
            <person name="Nourani A."/>
            <person name="Boudreault A.A."/>
            <person name="Zhang Y."/>
            <person name="Heliot L."/>
            <person name="Allard S."/>
            <person name="Savard J."/>
            <person name="Lane W.S."/>
            <person name="Stillman D.J."/>
            <person name="Cote J."/>
        </authorList>
    </citation>
    <scope>FUNCTION IN THE NUA4 COMPLEX</scope>
</reference>
<reference key="8">
    <citation type="journal article" date="2000" name="Nature">
        <title>Redundant roles for the TFIID and SAGA complexes in global transcription.</title>
        <authorList>
            <person name="Lee T.I."/>
            <person name="Causton H.C."/>
            <person name="Holstege F.C."/>
            <person name="Shen W.C."/>
            <person name="Hannett N."/>
            <person name="Jennings E.G."/>
            <person name="Winston F."/>
            <person name="Green M.R."/>
            <person name="Young R.A."/>
        </authorList>
    </citation>
    <scope>FUNCTION</scope>
</reference>
<reference key="9">
    <citation type="journal article" date="2001" name="Science">
        <title>Recruitment of HAT complexes by direct activator interactions with the ATM-related Tra1 subunit.</title>
        <authorList>
            <person name="Brown C.E."/>
            <person name="Howe L."/>
            <person name="Sousa K."/>
            <person name="Alley S.C."/>
            <person name="Carrozza M.J."/>
            <person name="Tan S."/>
            <person name="Workman J.L."/>
        </authorList>
    </citation>
    <scope>FUNCTION</scope>
    <scope>MUTANT TRA1-2</scope>
</reference>
<reference key="10">
    <citation type="journal article" date="2002" name="Mol. Cell. Biol.">
        <title>The novel SLIK histone acetyltransferase complex functions in the yeast retrograde response pathway.</title>
        <authorList>
            <person name="Pray-Grant M.G."/>
            <person name="Schieltz D."/>
            <person name="McMahon S.J."/>
            <person name="Wood J.M."/>
            <person name="Kennedy E.L."/>
            <person name="Cook R.G."/>
            <person name="Workman J.L."/>
            <person name="Yates J.R. III"/>
            <person name="Grant P.A."/>
        </authorList>
    </citation>
    <scope>IDENTIFICATION IN THE SLIK COMPLEX</scope>
</reference>
<reference key="11">
    <citation type="journal article" date="2002" name="Proc. Natl. Acad. Sci. U.S.A.">
        <title>SALSA, a variant of yeast SAGA, contains truncated Spt7, which correlates with activated transcription.</title>
        <authorList>
            <person name="Sterner D.E."/>
            <person name="Belotserkovskaya R."/>
            <person name="Berger S.L."/>
        </authorList>
    </citation>
    <scope>IDENTIFICATION IN THE SALSA COMPLEX</scope>
</reference>
<reference key="12">
    <citation type="journal article" date="2003" name="Mol. Cell">
        <title>Assigning function to yeast proteins by integration of technologies.</title>
        <authorList>
            <person name="Hazbun T.R."/>
            <person name="Malmstroem L."/>
            <person name="Anderson S."/>
            <person name="Graczyk B.J."/>
            <person name="Fox B."/>
            <person name="Riffle M."/>
            <person name="Sundin B.A."/>
            <person name="Aranda J.D."/>
            <person name="McDonald W.H."/>
            <person name="Chiu C.-H."/>
            <person name="Snydsman B.E."/>
            <person name="Bradley P."/>
            <person name="Muller E.G.D."/>
            <person name="Fields S."/>
            <person name="Baker D."/>
            <person name="Yates J.R. III"/>
            <person name="Davis T.N."/>
        </authorList>
    </citation>
    <scope>IDENTIFICATION BY MASS SPECTROMETRY</scope>
</reference>
<reference key="13">
    <citation type="journal article" date="2005" name="Mol. Cell. Biol.">
        <title>Regulation of NuA4 histone acetyltransferase activity in transcription and DNA repair by phosphorylation of histone H4.</title>
        <authorList>
            <person name="Utley R.T."/>
            <person name="Lacoste N."/>
            <person name="Jobin-Robitaille O."/>
            <person name="Allard S."/>
            <person name="Cote J."/>
        </authorList>
    </citation>
    <scope>FUNCTION IN THE NUA4 COMPLEX</scope>
</reference>
<reference key="14">
    <citation type="journal article" date="2005" name="Nature">
        <title>Chd1 chromodomain links histone H3 methylation with SAGA- and SLIK-dependent acetylation.</title>
        <authorList>
            <person name="Pray-Grant M.G."/>
            <person name="Daniel J.A."/>
            <person name="Schieltz D."/>
            <person name="Yates J.R. III"/>
            <person name="Grant P.A."/>
        </authorList>
    </citation>
    <scope>IDENTIFICATION IN THE SLIK COMPLEX</scope>
</reference>
<reference key="15">
    <citation type="journal article" date="2008" name="BMC Genet.">
        <title>Systematic genetic array analysis links the Saccharomyces cerevisiae SAGA/SLIK and NuA4 component Tra1 to multiple cellular processes.</title>
        <authorList>
            <person name="Hoke S.M."/>
            <person name="Guzzo J."/>
            <person name="Andrews B."/>
            <person name="Brandl C.J."/>
        </authorList>
    </citation>
    <scope>SUBCELLULAR LOCATION</scope>
</reference>
<reference key="16">
    <citation type="journal article" date="2008" name="Mol. Cell. Proteomics">
        <title>A multidimensional chromatography technology for in-depth phosphoproteome analysis.</title>
        <authorList>
            <person name="Albuquerque C.P."/>
            <person name="Smolka M.B."/>
            <person name="Payne S.H."/>
            <person name="Bafna V."/>
            <person name="Eng J."/>
            <person name="Zhou H."/>
        </authorList>
    </citation>
    <scope>PHOSPHORYLATION [LARGE SCALE ANALYSIS] AT SER-172 AND SER-542</scope>
    <scope>IDENTIFICATION BY MASS SPECTROMETRY [LARGE SCALE ANALYSIS]</scope>
</reference>
<reference key="17">
    <citation type="journal article" date="2009" name="Science">
        <title>Global analysis of Cdk1 substrate phosphorylation sites provides insights into evolution.</title>
        <authorList>
            <person name="Holt L.J."/>
            <person name="Tuch B.B."/>
            <person name="Villen J."/>
            <person name="Johnson A.D."/>
            <person name="Gygi S.P."/>
            <person name="Morgan D.O."/>
        </authorList>
    </citation>
    <scope>PHOSPHORYLATION [LARGE SCALE ANALYSIS] AT SER-172 AND SER-542</scope>
    <scope>IDENTIFICATION BY MASS SPECTROMETRY [LARGE SCALE ANALYSIS]</scope>
</reference>
<reference key="18">
    <citation type="journal article" date="2010" name="Curr. Genet.">
        <title>Mutational analysis of the C-terminal FATC domain of Saccharomyces cerevisiae Tra1.</title>
        <authorList>
            <person name="Hoke S.M."/>
            <person name="Irina Mutiu A."/>
            <person name="Genereaux J."/>
            <person name="Kvas S."/>
            <person name="Buck M."/>
            <person name="Yu M."/>
            <person name="Gloor G.B."/>
            <person name="Brandl C.J."/>
        </authorList>
    </citation>
    <scope>DOMAIN</scope>
</reference>
<reference key="19">
    <citation type="journal article" date="2012" name="Proc. Natl. Acad. Sci. U.S.A.">
        <title>N-terminal acetylome analyses and functional insights of the N-terminal acetyltransferase NatB.</title>
        <authorList>
            <person name="Van Damme P."/>
            <person name="Lasa M."/>
            <person name="Polevoda B."/>
            <person name="Gazquez C."/>
            <person name="Elosegui-Artola A."/>
            <person name="Kim D.S."/>
            <person name="De Juan-Pardo E."/>
            <person name="Demeyer K."/>
            <person name="Hole K."/>
            <person name="Larrea E."/>
            <person name="Timmerman E."/>
            <person name="Prieto J."/>
            <person name="Arnesen T."/>
            <person name="Sherman F."/>
            <person name="Gevaert K."/>
            <person name="Aldabe R."/>
        </authorList>
    </citation>
    <scope>ACETYLATION [LARGE SCALE ANALYSIS] AT SER-2</scope>
    <scope>CLEAVAGE OF INITIATOR METHIONINE [LARGE SCALE ANALYSIS]</scope>
    <scope>IDENTIFICATION BY MASS SPECTROMETRY [LARGE SCALE ANALYSIS]</scope>
</reference>
<reference key="20">
    <citation type="journal article" date="2014" name="EMBO J.">
        <title>Architecture of the Saccharomyces cerevisiae SAGA transcription coactivator complex.</title>
        <authorList>
            <person name="Han Y."/>
            <person name="Luo J."/>
            <person name="Ranish J."/>
            <person name="Hahn S."/>
        </authorList>
    </citation>
    <scope>SUBUNIT</scope>
</reference>
<reference key="21">
    <citation type="journal article" date="2017" name="Mol. Cell">
        <title>SAGA is a general cofactor for RNA polymerase II transcription.</title>
        <authorList>
            <person name="Baptista T."/>
            <person name="Gruenberg S."/>
            <person name="Minoungou N."/>
            <person name="Koster M.J.E."/>
            <person name="Timmers H.T.M."/>
            <person name="Hahn S."/>
            <person name="Devys D."/>
            <person name="Tora L."/>
        </authorList>
    </citation>
    <scope>FUNCTION</scope>
</reference>
<reference key="22">
    <citation type="journal article" date="2021" name="J. Biol. Chem.">
        <title>SAGA and SAGA-like SLIK transcriptional coactivators are structurally and biochemically equivalent.</title>
        <authorList>
            <person name="Adamus K."/>
            <person name="Reboul C."/>
            <person name="Voss J."/>
            <person name="Huang C."/>
            <person name="Schittenhelm R.B."/>
            <person name="Le S.N."/>
            <person name="Ellisdon A.M."/>
            <person name="Elmlund H."/>
            <person name="Boudes M."/>
            <person name="Elmlund D."/>
        </authorList>
    </citation>
    <scope>FUNCTION</scope>
    <scope>SUBUNIT</scope>
</reference>
<reference key="23">
    <citation type="journal article" date="2004" name="Mol. Cell">
        <title>Molecular architecture of the S. cerevisiae SAGA complex.</title>
        <authorList>
            <person name="Wu P.Y."/>
            <person name="Ruhlmann C."/>
            <person name="Winston F."/>
            <person name="Schultz P."/>
        </authorList>
    </citation>
    <scope>3D-STRUCTURE MODELING OF THE SAGA COMPLEX</scope>
</reference>
<reference evidence="32" key="24">
    <citation type="journal article" date="2017" name="Elife">
        <title>Cryo-EM structure of the SAGA and NuA4 coactivator subunit Tra1 at 3.7 angstrom resolution.</title>
        <authorList>
            <person name="Diaz-Santin L.M."/>
            <person name="Lukoyanova N."/>
            <person name="Aciyan E."/>
            <person name="Cheung A.C."/>
        </authorList>
    </citation>
    <scope>STRUCTURE BY ELECTRON MICROSCOPY (3.70 ANGSTROMS)</scope>
</reference>
<reference evidence="33" key="25">
    <citation type="journal article" date="2018" name="Nat. Commun.">
        <title>Architecture of the Saccharomyces cerevisiae NuA4/TIP60 complex.</title>
        <authorList>
            <person name="Wang X."/>
            <person name="Ahmad S."/>
            <person name="Zhang Z."/>
            <person name="Cote J."/>
            <person name="Cai G."/>
        </authorList>
    </citation>
    <scope>STRUCTURE BY ELECTRON MICROSCOPY (4.70 ANGSTROMS) OF 1-2627 AND 2630-3744 IN THE NUA4 COMPLEX</scope>
</reference>
<reference evidence="34" key="26">
    <citation type="journal article" date="2019" name="Cell Discov.">
        <title>Architecture of Saccharomyces cerevisiae SAGA complex.</title>
        <authorList>
            <person name="Liu G."/>
            <person name="Zheng X."/>
            <person name="Guan H."/>
            <person name="Cao Y."/>
            <person name="Qu H."/>
            <person name="Kang J."/>
            <person name="Ren X."/>
            <person name="Lei J."/>
            <person name="Dong M.Q."/>
            <person name="Li X."/>
            <person name="Li H."/>
        </authorList>
    </citation>
    <scope>STRUCTURE BY ELECTRON MICROSCOPY (4.60 ANGSTROMS) IN THE SAGA COMPLEX</scope>
</reference>
<reference evidence="35 36" key="27">
    <citation type="journal article" date="2020" name="Nature">
        <title>Structure of the transcription coactivator SAGA.</title>
        <authorList>
            <person name="Wang H."/>
            <person name="Dienemann C."/>
            <person name="Stutzer A."/>
            <person name="Urlaub H."/>
            <person name="Cheung A.C.M."/>
            <person name="Cramer P."/>
        </authorList>
    </citation>
    <scope>STRUCTURE BY ELECTRON MICROSCOPY (3.40 ANGSTROMS) IN THE SAGA COMPLEX</scope>
</reference>
<reference evidence="37 38" key="28">
    <citation type="journal article" date="2022" name="Nature">
        <title>Structure of the NuA4 acetyltransferase complex bound to the nucleosome.</title>
        <authorList>
            <person name="Qu K."/>
            <person name="Chen K."/>
            <person name="Wang H."/>
            <person name="Li X."/>
            <person name="Chen Z."/>
        </authorList>
    </citation>
    <scope>STRUCTURE BY ELECTRON MICROSCOPY (3.10 ANGSTROMS) IN THE NUA4 COMPLEX</scope>
</reference>
<reference evidence="39 40" key="29">
    <citation type="journal article" date="2022" name="Proc. Natl. Acad. Sci. U.S.A.">
        <title>Structure of the NuA4 histone acetyltransferase complex.</title>
        <authorList>
            <person name="Ji L."/>
            <person name="Zhao L."/>
            <person name="Xu K."/>
            <person name="Gao H."/>
            <person name="Zhou Y."/>
            <person name="Kornberg R.D."/>
            <person name="Zhang H."/>
        </authorList>
    </citation>
    <scope>STRUCTURE BY ELECTRON MICROSCOPY (3.80 ANGSTROMS) IN THE NUA4 COMPLEX</scope>
</reference>
<sequence length="3744" mass="433180">MSLTEQIEQFASRFRDDDATLQSRYSTLSELYDIMELLNSPEDYHFFLQAVIPLLLNQLKEVPISYDAHSPEQKLRNSMLDIFNRCLMNQTFQPYAMEVLEFLLSVLPKENEENGILCMKVLTTLFKSFKSILQDKLDSFIRIIIQIYKNTPNLINQTFYEAGKAEQGDLDSPKEPQADELLDEFSKNDEEKDFPSKQSSTEPRFENSTSSNGLRSSMFSFKILSECPITMVTLYSSYKQLTSTSLPEFTPLIMNLLNIQIKQQQEAREQAESRGEHFTSISTEIINRPAYCDFILAQIKATSFLAYVFIRGYAPEFLQDYVNFVPDLIIRLLQDCPSELSSARKELLHATRHILSTNYKKLFLPKLDYLFDERILIGNGFTMHETLRPLAYSTVADFIHNIRSELQLSEIEKTIKIYTGYLLDESLALTVQIMSAKLLLNLVERILKLGKENPQEAPRAKKLLMIIIDSYMNRFKTLNRQYDTIMKYYGRYETHKKEKAEKLKNSIQDNDKESEEFMRKVLEPSDDDHLMPQPKKEDINDSPDVEMTESDKVVKNDVEMFDIKNYAPILLLPTPTNDPIKDAFYLYRTLMSFLKTIIHDLKVFNPPPNEYTVANPKLWASVSRVFSYEEVIVFKDLFHECIIGLKFFKDHNEKLSPETTKKHFDISMPSLPVSATKDARELMDYLAFMFMQMDNATFNEIIEQELPFVYERMLEDSGLLHVAQSFLTSEITSPNFAGILLRFLKGKLKDLGNVDFNTSNVLIRLFKLSFMSVNLFPNINEVVLLPHLNDLILNSLKYSTTAEEPLVYFYLIRTLFRSIGGGRFENLYRSIKPILQVLLQSLNQMILTARLPHERELYVELCITVPVRLSVLAPYLPFLMKPLVFALQQYPDLVSQGLRTLELCIDNLTAEYFDPIIEPVIDDVSKALFNLLQPQPFNHAISHNVVRILGKLGGRNRQFLKPPTDLTEKTELDIDAIADFKINGMPEDVPLSVTPGIQSALNILQSYKSDIHYRKSAYKYLTCVLLLMTKSSAEFPTNYTELLKTAVNSIKLERIGIEKNFDLEPTVNKRDYSNQENLFLRLLESVFYATSIKELKDDAMDLLNNLLDHFCLLQVNTTLLNKRNYNGTFNIDLKNPNFMLDSSLILDAIPFALSYYIPEVREVGVLAYKRIYEKSCLIYGEELALSHSFIPELAKQFIHLCYDETYYNKRGGVLGIKVLIDNVKSSSVFLKKYQYNLANGLLFVLKDTQSEAPSAITDSAEKLLIDLLSITFADVKEEDLGNKVLENTLTDIVCELSNANPKVRNACQKSLHTISNLTGIPIVKLMDHSKQFLLSPIFAKPLRALPFTMQIGNVDAITFCLSLPNTFLTFNEELFRLLQESIVLADAEDESLSTNIQKTTEYSTSEQLVQLRIACIKLLAIALKNEEFATAQQGNIRIRILAVFFKTMLKTSPEIINTTYEALKGSLAENSKLPKELLQNGLKPLLMNLSDHQKLTVPGLDALSKLLELLIAYFKVEIGRKLLDHLTAWCRVEVLDTLFGQDLAEQMPTKIIVSIINIFHLLPPQADMFLNDLLLKVMLLERKLRLQLDSPFRTPLARYLNRFHNPVTEYFKKNMTLRQLVLFMCNIVQRPEAKELAEDFEKELDNFYDFYISNIPKNQVRVVSFFTNMVDLFNTMVITNGDEWLKKKGNMILKLKDMLNLTLKTIKENSFYIDHLQLNQSIAKFQALYLRFTELSERDQNPLLLDFIDFSFSNGIKASYSLKKFIFHNIIASSNKEKQNNFINDATLFVLSDKCLDARIFVLKNVINSTLIYEVATSGSLKSYLVEDKKPKWLELLHNKIWKNSNAILAYDVLDHHDLFRFELLQLSAIFIKADPEIIAEIKKDIIKFCWNFIKLEDTLIKQSAYLVTSYFISKFDFPIKVVTQVFVALLRSSHVEARYLVKQSLDVLTPVLHERMNAAGTPDTWINWVKRVMVENSSSQNNILYQFLISHPDLFFNSRDLFISNIIHHMNKITFMSNSNSDSHTLAIDLASLILYWENKTLEITNVNNTKTDSDGDVVMSDSKSDINPVEADTTAIIVDANNNSPISLHLREACTAFLIRYVCASNHRAIETELGLRAINILSELISDKHWTNVNVKLVYFEKFLIFQDLDSENILYYCMNALDVLYVFFKNKTKEWIMENLPTIQNLLEKCIKSDHHDVQEALQKVLQVIMKAIKAQGVSVIIEEESPGKTFIQMLTSVITQDLQETSSVTAGVTLAWVLFMNFPDNIVPLLTPLMKTFSKLCKDHLSISQPKDAMALEEARITTKLLEKVLYILSLKVSLLGDSRRPFLSTVALLIDHSMDQNFLRKIVNMSRSWIFNTEIFPTVKEKAAILTKMLAFEIRGEPSLSKLFYEIVLKLFDQEHFNNTEITVRMEQPFLVGTRVEDIGIRKRFMTILDNSLERDIKERLYYVIRDQNWEFIADYPWLNQALQLLYGSFNREKELSLKNIYCLSPPSILQEYLPENAEMVTEVNDLELSNFVKGHIASMQGLCRIISSDFIDSLIEIFYQDPKAIHRAWVTLFPQVYKSIPKNEKYGFVRSIITLLSKPYHTRQISSRTNVINMLLDSISKIESLELPPHLVKYLAISYNAWYQSINILESIQSNTSIDNTKIIEANEDALLELYVNLQEEDMFYGLWRRRAKYTETNIGLSYEQIGLWDKAQQLYEVAQVKARSGALPYSQSEYALWEDNWIQCAEKLQHWDVLTELAKHEGFTDLLLECGWRVADWNSDRDALEQSVKSVMDVPTPRRQMFKTFLALQNFAESRKGDQEVRKLCDEGIQLSLIKWVSLPIRYTPAHKWLLHGFQQYMEFLEATQIYANLHTTTVQNLDSKAQEIKRILQAWRDRLPNTWDDVNMWNDLVTWRQHAFQVINNAYLPLIPALQQSNSNSNINTHAYRGYHEIAWVINRFAHVARKHNMPDVCISQLARIYTLPNIEIQEAFLKLREQAKCHYQNMNELTTGLDVISNTNLVYFGTVQKAEFFTLKGMFLSKLRAYEEANQAFATAVQIDLNLAKAWAQWGFFNDRRLSEEPNNISFASNAISCYLQAAGLYKNSKIRELLCRILWLISIDDASGMLTNAFDSFRGEIPVWYWITFIPQLLTSLSHKEANMVRHILIRIAKSYPQALHFQLRTTKEDFAVIQRQTMAVMGDKPDTNDRNGRRQPWEYLQELNNILKTAYPLLALSLESLVAQINDRFKSTTDEDLFRLINVLLIDGTLNYNRLPFPRKNPKLPENTEKNLVKFSTTLLAPYIRPKFNADFIDNKPDYETYIKRLRYWRRRLENKLDRASKKENLEVLCPHLSNFHHQKFEDIEIPGQYLLNKDNNVHFIKIARFLPTVDFVRGTHSSYRRLMIRGHDGSVHSFAVQYPAVRHSRREERMFQLYRLFNKSLSKNVETRRRSIQFNLPIAIPLSPQVRIMNDSVSFTTLHEIHNEFCKKKGFDPDDIQDFMADKLNAAHDDALPAPDMTILKVEIFNSIQTMFVPSNVLKDHFTSLFTQFEDFWLFRKQFASQYSSFVFMSYMMMINNRTPHKIHVDKTSGNVFTLEMLPSRFPYERVKPLLKNHDLSLPPDSPIFHNNEPVPFRLTPNIQSLIGDSALEGIFAVNLFTISRALIEPDNELNTYLALFIRDEIISWFSNLHRPIIENPQLREMVQTNVDLIIRKVAQLGHLNSTPTVTTQFILDCIGSAVSPRNLARTDVNFMPWF</sequence>
<feature type="initiator methionine" description="Removed" evidence="43">
    <location>
        <position position="1"/>
    </location>
</feature>
<feature type="chain" id="PRO_0000088854" description="SAGA complex/NuA4 acetyltransferase complex subunit TRA1">
    <location>
        <begin position="2"/>
        <end position="3744"/>
    </location>
</feature>
<feature type="repeat" description="HEAT 1" evidence="1">
    <location>
        <begin position="2"/>
        <end position="40"/>
    </location>
</feature>
<feature type="repeat" description="HEAT 2" evidence="1">
    <location>
        <begin position="46"/>
        <end position="92"/>
    </location>
</feature>
<feature type="repeat" description="HEAT 3" evidence="1">
    <location>
        <begin position="94"/>
        <end position="131"/>
    </location>
</feature>
<feature type="repeat" description="HEAT 4" evidence="1">
    <location>
        <begin position="135"/>
        <end position="172"/>
    </location>
</feature>
<feature type="repeat" description="HEAT 5" evidence="1">
    <location>
        <begin position="247"/>
        <end position="284"/>
    </location>
</feature>
<feature type="repeat" description="HEAT 6" evidence="1">
    <location>
        <begin position="319"/>
        <end position="357"/>
    </location>
</feature>
<feature type="repeat" description="HEAT 7" evidence="1">
    <location>
        <begin position="437"/>
        <end position="477"/>
    </location>
</feature>
<feature type="repeat" description="HEAT 8" evidence="1">
    <location>
        <begin position="588"/>
        <end position="628"/>
    </location>
</feature>
<feature type="repeat" description="HEAT 9" evidence="1">
    <location>
        <begin position="734"/>
        <end position="771"/>
    </location>
</feature>
<feature type="repeat" description="HEAT 10" evidence="1">
    <location>
        <begin position="779"/>
        <end position="821"/>
    </location>
</feature>
<feature type="repeat" description="HEAT 11" evidence="1">
    <location>
        <begin position="829"/>
        <end position="867"/>
    </location>
</feature>
<feature type="repeat" description="HEAT 12" evidence="1">
    <location>
        <begin position="870"/>
        <end position="910"/>
    </location>
</feature>
<feature type="repeat" description="HEAT 13" evidence="1">
    <location>
        <begin position="919"/>
        <end position="958"/>
    </location>
</feature>
<feature type="repeat" description="HEAT 14" evidence="1">
    <location>
        <begin position="1074"/>
        <end position="1112"/>
    </location>
</feature>
<feature type="repeat" description="HEAT 15" evidence="1">
    <location>
        <begin position="1188"/>
        <end position="1225"/>
    </location>
</feature>
<feature type="repeat" description="HEAT 16" evidence="1">
    <location>
        <begin position="1283"/>
        <end position="1320"/>
    </location>
</feature>
<feature type="repeat" description="HEAT 17" evidence="1">
    <location>
        <begin position="1369"/>
        <end position="1408"/>
    </location>
</feature>
<feature type="repeat" description="HEAT 18" evidence="1">
    <location>
        <begin position="1435"/>
        <end position="1472"/>
    </location>
</feature>
<feature type="repeat" description="HEAT 19" evidence="1">
    <location>
        <begin position="1476"/>
        <end position="1512"/>
    </location>
</feature>
<feature type="repeat" description="HEAT 20" evidence="1">
    <location>
        <begin position="1693"/>
        <end position="1734"/>
    </location>
</feature>
<feature type="repeat" description="HEAT 21" evidence="1">
    <location>
        <begin position="1739"/>
        <end position="1776"/>
    </location>
</feature>
<feature type="repeat" description="HEAT 22" evidence="1">
    <location>
        <begin position="1918"/>
        <end position="1955"/>
    </location>
</feature>
<feature type="repeat" description="HEAT 23" evidence="1">
    <location>
        <begin position="2115"/>
        <end position="2155"/>
    </location>
</feature>
<feature type="repeat" description="HEAT 24" evidence="1">
    <location>
        <begin position="2182"/>
        <end position="2219"/>
    </location>
</feature>
<feature type="repeat" description="HEAT 25" evidence="1">
    <location>
        <begin position="2230"/>
        <end position="2267"/>
    </location>
</feature>
<feature type="repeat" description="HEAT 26" evidence="1">
    <location>
        <begin position="2269"/>
        <end position="2307"/>
    </location>
</feature>
<feature type="repeat" description="HEAT 27" evidence="1">
    <location>
        <begin position="2536"/>
        <end position="2573"/>
    </location>
</feature>
<feature type="domain" description="FAT" evidence="3">
    <location>
        <begin position="2622"/>
        <end position="3177"/>
    </location>
</feature>
<feature type="domain" description="PI3K/PI4K catalytic" evidence="2">
    <location>
        <begin position="3374"/>
        <end position="3732"/>
    </location>
</feature>
<feature type="domain" description="FATC" evidence="3 4">
    <location>
        <begin position="3712"/>
        <end position="3744"/>
    </location>
</feature>
<feature type="region of interest" description="HEAT" evidence="30">
    <location>
        <begin position="2"/>
        <end position="2598"/>
    </location>
</feature>
<feature type="region of interest" description="Disordered" evidence="5">
    <location>
        <begin position="185"/>
        <end position="212"/>
    </location>
</feature>
<feature type="region of interest" description="Disordered" evidence="5">
    <location>
        <begin position="522"/>
        <end position="546"/>
    </location>
</feature>
<feature type="region of interest" description="Head" evidence="30">
    <location>
        <begin position="2599"/>
        <end position="3744"/>
    </location>
</feature>
<feature type="region of interest" description="G-loop" evidence="2">
    <location>
        <begin position="3380"/>
        <end position="3386"/>
    </location>
</feature>
<feature type="region of interest" description="Catalytic loop" evidence="2">
    <location>
        <begin position="3563"/>
        <end position="3571"/>
    </location>
</feature>
<feature type="region of interest" description="Activation loop" evidence="2">
    <location>
        <begin position="3600"/>
        <end position="3625"/>
    </location>
</feature>
<feature type="compositionally biased region" description="Basic and acidic residues" evidence="5">
    <location>
        <begin position="185"/>
        <end position="195"/>
    </location>
</feature>
<feature type="compositionally biased region" description="Polar residues" evidence="5">
    <location>
        <begin position="196"/>
        <end position="212"/>
    </location>
</feature>
<feature type="compositionally biased region" description="Basic and acidic residues" evidence="5">
    <location>
        <begin position="522"/>
        <end position="539"/>
    </location>
</feature>
<feature type="modified residue" description="N-acetylserine" evidence="43">
    <location>
        <position position="2"/>
    </location>
</feature>
<feature type="modified residue" description="Phosphoserine" evidence="41 42">
    <location>
        <position position="172"/>
    </location>
</feature>
<feature type="modified residue" description="Phosphoserine" evidence="41 42">
    <location>
        <position position="542"/>
    </location>
</feature>
<feature type="mutagenesis site" description="In TRA1-2; when associated with L-604; R-2733; P-3145; S-3222 and G-3302. Defects in its ability to interact with acidic activators." evidence="10">
    <original>L</original>
    <variation>S</variation>
    <location>
        <position position="241"/>
    </location>
</feature>
<feature type="mutagenesis site" description="In TRA1-2; when associated with S-241; R-2733; P-3145; S-3222 and G-3302. Defects in its ability to interact with acidic activators." evidence="10">
    <original>F</original>
    <variation>L</variation>
    <location>
        <position position="604"/>
    </location>
</feature>
<feature type="mutagenesis site" description="In TRA1-2; when associated with S-241; L-604; P-3145; S-3222 and G-3302. Defects in its ability to interact with acidic activators." evidence="10">
    <original>W</original>
    <variation>R</variation>
    <location>
        <position position="2733"/>
    </location>
</feature>
<feature type="mutagenesis site" description="In TRA1-2; when associated with S-241; L-604; R-2733; S-3222 and G-3302. Defects in its ability to interact with acidic activators." evidence="10">
    <original>S</original>
    <variation>P</variation>
    <location>
        <position position="3145"/>
    </location>
</feature>
<feature type="mutagenesis site" description="In TRA1-2; when associated with S-241; L-604; R-2733; P-3145 and G-3302. Defects in its ability to interact with acidic activators." evidence="10">
    <original>L</original>
    <variation>S</variation>
    <location>
        <position position="3222"/>
    </location>
</feature>
<feature type="mutagenesis site" description="In TRA1-2; when associated with S-241; L-604; R-2733; P-3145 and S-3222. Defects in its ability to interact with acidic activators." evidence="10">
    <original>D</original>
    <variation>G</variation>
    <location>
        <position position="3302"/>
    </location>
</feature>
<feature type="helix" evidence="45">
    <location>
        <begin position="4"/>
        <end position="9"/>
    </location>
</feature>
<feature type="turn" evidence="45">
    <location>
        <begin position="20"/>
        <end position="22"/>
    </location>
</feature>
<feature type="turn" evidence="45">
    <location>
        <begin position="24"/>
        <end position="26"/>
    </location>
</feature>
<feature type="helix" evidence="45">
    <location>
        <begin position="28"/>
        <end position="30"/>
    </location>
</feature>
<feature type="helix" evidence="46">
    <location>
        <begin position="31"/>
        <end position="37"/>
    </location>
</feature>
<feature type="helix" evidence="45">
    <location>
        <begin position="45"/>
        <end position="60"/>
    </location>
</feature>
<feature type="strand" evidence="45">
    <location>
        <begin position="67"/>
        <end position="72"/>
    </location>
</feature>
<feature type="helix" evidence="45">
    <location>
        <begin position="73"/>
        <end position="85"/>
    </location>
</feature>
<feature type="helix" evidence="45">
    <location>
        <begin position="92"/>
        <end position="96"/>
    </location>
</feature>
<feature type="turn" evidence="45">
    <location>
        <begin position="97"/>
        <end position="99"/>
    </location>
</feature>
<feature type="helix" evidence="45">
    <location>
        <begin position="100"/>
        <end position="103"/>
    </location>
</feature>
<feature type="helix" evidence="46">
    <location>
        <begin position="107"/>
        <end position="109"/>
    </location>
</feature>
<feature type="strand" evidence="45">
    <location>
        <begin position="111"/>
        <end position="113"/>
    </location>
</feature>
<feature type="turn" evidence="44">
    <location>
        <begin position="114"/>
        <end position="117"/>
    </location>
</feature>
<feature type="helix" evidence="45">
    <location>
        <begin position="118"/>
        <end position="131"/>
    </location>
</feature>
<feature type="helix" evidence="45">
    <location>
        <begin position="141"/>
        <end position="156"/>
    </location>
</feature>
<feature type="turn" evidence="45">
    <location>
        <begin position="219"/>
        <end position="221"/>
    </location>
</feature>
<feature type="helix" evidence="46">
    <location>
        <begin position="223"/>
        <end position="225"/>
    </location>
</feature>
<feature type="helix" evidence="45">
    <location>
        <begin position="232"/>
        <end position="242"/>
    </location>
</feature>
<feature type="strand" evidence="45">
    <location>
        <begin position="246"/>
        <end position="249"/>
    </location>
</feature>
<feature type="helix" evidence="45">
    <location>
        <begin position="251"/>
        <end position="253"/>
    </location>
</feature>
<feature type="helix" evidence="46">
    <location>
        <begin position="262"/>
        <end position="272"/>
    </location>
</feature>
<feature type="strand" evidence="45">
    <location>
        <begin position="282"/>
        <end position="287"/>
    </location>
</feature>
<feature type="strand" evidence="45">
    <location>
        <begin position="290"/>
        <end position="293"/>
    </location>
</feature>
<feature type="helix" evidence="45">
    <location>
        <begin position="294"/>
        <end position="308"/>
    </location>
</feature>
<feature type="helix" evidence="45">
    <location>
        <begin position="309"/>
        <end position="313"/>
    </location>
</feature>
<feature type="strand" evidence="45">
    <location>
        <begin position="322"/>
        <end position="324"/>
    </location>
</feature>
<feature type="helix" evidence="45">
    <location>
        <begin position="325"/>
        <end position="334"/>
    </location>
</feature>
<feature type="helix" evidence="45">
    <location>
        <begin position="342"/>
        <end position="355"/>
    </location>
</feature>
<feature type="strand" evidence="45">
    <location>
        <begin position="357"/>
        <end position="359"/>
    </location>
</feature>
<feature type="turn" evidence="45">
    <location>
        <begin position="360"/>
        <end position="363"/>
    </location>
</feature>
<feature type="helix" evidence="45">
    <location>
        <begin position="364"/>
        <end position="368"/>
    </location>
</feature>
<feature type="turn" evidence="45">
    <location>
        <begin position="369"/>
        <end position="371"/>
    </location>
</feature>
<feature type="strand" evidence="45">
    <location>
        <begin position="372"/>
        <end position="374"/>
    </location>
</feature>
<feature type="helix" evidence="45">
    <location>
        <begin position="375"/>
        <end position="377"/>
    </location>
</feature>
<feature type="helix" evidence="46">
    <location>
        <begin position="381"/>
        <end position="385"/>
    </location>
</feature>
<feature type="helix" evidence="45">
    <location>
        <begin position="388"/>
        <end position="402"/>
    </location>
</feature>
<feature type="helix" evidence="45">
    <location>
        <begin position="408"/>
        <end position="423"/>
    </location>
</feature>
<feature type="strand" evidence="45">
    <location>
        <begin position="425"/>
        <end position="427"/>
    </location>
</feature>
<feature type="helix" evidence="45">
    <location>
        <begin position="429"/>
        <end position="452"/>
    </location>
</feature>
<feature type="helix" evidence="45">
    <location>
        <begin position="454"/>
        <end position="456"/>
    </location>
</feature>
<feature type="helix" evidence="45">
    <location>
        <begin position="457"/>
        <end position="479"/>
    </location>
</feature>
<feature type="helix" evidence="45">
    <location>
        <begin position="482"/>
        <end position="500"/>
    </location>
</feature>
<feature type="strand" evidence="45">
    <location>
        <begin position="510"/>
        <end position="512"/>
    </location>
</feature>
<feature type="helix" evidence="45">
    <location>
        <begin position="513"/>
        <end position="519"/>
    </location>
</feature>
<feature type="helix" evidence="45">
    <location>
        <begin position="562"/>
        <end position="566"/>
    </location>
</feature>
<feature type="helix" evidence="45">
    <location>
        <begin position="579"/>
        <end position="600"/>
    </location>
</feature>
<feature type="helix" evidence="45">
    <location>
        <begin position="601"/>
        <end position="604"/>
    </location>
</feature>
<feature type="turn" evidence="45">
    <location>
        <begin position="608"/>
        <end position="612"/>
    </location>
</feature>
<feature type="turn" evidence="45">
    <location>
        <begin position="616"/>
        <end position="621"/>
    </location>
</feature>
<feature type="helix" evidence="45">
    <location>
        <begin position="628"/>
        <end position="643"/>
    </location>
</feature>
<feature type="helix" evidence="45">
    <location>
        <begin position="644"/>
        <end position="646"/>
    </location>
</feature>
<feature type="turn" evidence="46">
    <location>
        <begin position="651"/>
        <end position="653"/>
    </location>
</feature>
<feature type="strand" evidence="46">
    <location>
        <begin position="666"/>
        <end position="668"/>
    </location>
</feature>
<feature type="helix" evidence="45">
    <location>
        <begin position="677"/>
        <end position="689"/>
    </location>
</feature>
<feature type="helix" evidence="45">
    <location>
        <begin position="695"/>
        <end position="713"/>
    </location>
</feature>
<feature type="helix" evidence="45">
    <location>
        <begin position="717"/>
        <end position="719"/>
    </location>
</feature>
<feature type="helix" evidence="45">
    <location>
        <begin position="720"/>
        <end position="727"/>
    </location>
</feature>
<feature type="turn" evidence="46">
    <location>
        <begin position="730"/>
        <end position="732"/>
    </location>
</feature>
<feature type="helix" evidence="45">
    <location>
        <begin position="733"/>
        <end position="747"/>
    </location>
</feature>
<feature type="helix" evidence="45">
    <location>
        <begin position="748"/>
        <end position="750"/>
    </location>
</feature>
<feature type="strand" evidence="45">
    <location>
        <begin position="751"/>
        <end position="754"/>
    </location>
</feature>
<feature type="helix" evidence="45">
    <location>
        <begin position="756"/>
        <end position="775"/>
    </location>
</feature>
<feature type="strand" evidence="45">
    <location>
        <begin position="776"/>
        <end position="780"/>
    </location>
</feature>
<feature type="turn" evidence="45">
    <location>
        <begin position="782"/>
        <end position="784"/>
    </location>
</feature>
<feature type="helix" evidence="45">
    <location>
        <begin position="789"/>
        <end position="798"/>
    </location>
</feature>
<feature type="turn" evidence="45">
    <location>
        <begin position="799"/>
        <end position="801"/>
    </location>
</feature>
<feature type="helix" evidence="45">
    <location>
        <begin position="807"/>
        <end position="818"/>
    </location>
</feature>
<feature type="strand" evidence="45">
    <location>
        <begin position="821"/>
        <end position="823"/>
    </location>
</feature>
<feature type="helix" evidence="45">
    <location>
        <begin position="828"/>
        <end position="830"/>
    </location>
</feature>
<feature type="helix" evidence="45">
    <location>
        <begin position="832"/>
        <end position="843"/>
    </location>
</feature>
<feature type="helix" evidence="45">
    <location>
        <begin position="854"/>
        <end position="862"/>
    </location>
</feature>
<feature type="strand" evidence="45">
    <location>
        <begin position="868"/>
        <end position="871"/>
    </location>
</feature>
<feature type="helix" evidence="46">
    <location>
        <begin position="873"/>
        <end position="875"/>
    </location>
</feature>
<feature type="turn" evidence="45">
    <location>
        <begin position="877"/>
        <end position="879"/>
    </location>
</feature>
<feature type="helix" evidence="45">
    <location>
        <begin position="880"/>
        <end position="889"/>
    </location>
</feature>
<feature type="turn" evidence="45">
    <location>
        <begin position="891"/>
        <end position="893"/>
    </location>
</feature>
<feature type="helix" evidence="45">
    <location>
        <begin position="894"/>
        <end position="906"/>
    </location>
</feature>
<feature type="turn" evidence="45">
    <location>
        <begin position="909"/>
        <end position="911"/>
    </location>
</feature>
<feature type="helix" evidence="45">
    <location>
        <begin position="914"/>
        <end position="917"/>
    </location>
</feature>
<feature type="helix" evidence="45">
    <location>
        <begin position="918"/>
        <end position="920"/>
    </location>
</feature>
<feature type="helix" evidence="45">
    <location>
        <begin position="921"/>
        <end position="930"/>
    </location>
</feature>
<feature type="turn" evidence="45">
    <location>
        <begin position="939"/>
        <end position="942"/>
    </location>
</feature>
<feature type="helix" evidence="45">
    <location>
        <begin position="943"/>
        <end position="951"/>
    </location>
</feature>
<feature type="strand" evidence="45">
    <location>
        <begin position="952"/>
        <end position="954"/>
    </location>
</feature>
<feature type="turn" evidence="45">
    <location>
        <begin position="955"/>
        <end position="959"/>
    </location>
</feature>
<feature type="turn" evidence="46">
    <location>
        <begin position="971"/>
        <end position="973"/>
    </location>
</feature>
<feature type="strand" evidence="45">
    <location>
        <begin position="977"/>
        <end position="980"/>
    </location>
</feature>
<feature type="strand" evidence="46">
    <location>
        <begin position="982"/>
        <end position="984"/>
    </location>
</feature>
<feature type="strand" evidence="45">
    <location>
        <begin position="985"/>
        <end position="987"/>
    </location>
</feature>
<feature type="strand" evidence="45">
    <location>
        <begin position="989"/>
        <end position="993"/>
    </location>
</feature>
<feature type="helix" evidence="45">
    <location>
        <begin position="997"/>
        <end position="1005"/>
    </location>
</feature>
<feature type="strand" evidence="46">
    <location>
        <begin position="1007"/>
        <end position="1009"/>
    </location>
</feature>
<feature type="helix" evidence="45">
    <location>
        <begin position="1012"/>
        <end position="1029"/>
    </location>
</feature>
<feature type="helix" evidence="45">
    <location>
        <begin position="1030"/>
        <end position="1032"/>
    </location>
</feature>
<feature type="helix" evidence="45">
    <location>
        <begin position="1039"/>
        <end position="1048"/>
    </location>
</feature>
<feature type="helix" evidence="45">
    <location>
        <begin position="1069"/>
        <end position="1089"/>
    </location>
</feature>
<feature type="turn" evidence="46">
    <location>
        <begin position="1093"/>
        <end position="1095"/>
    </location>
</feature>
<feature type="helix" evidence="45">
    <location>
        <begin position="1096"/>
        <end position="1121"/>
    </location>
</feature>
<feature type="strand" evidence="45">
    <location>
        <begin position="1124"/>
        <end position="1129"/>
    </location>
</feature>
<feature type="turn" evidence="45">
    <location>
        <begin position="1146"/>
        <end position="1148"/>
    </location>
</feature>
<feature type="helix" evidence="45">
    <location>
        <begin position="1149"/>
        <end position="1153"/>
    </location>
</feature>
<feature type="helix" evidence="45">
    <location>
        <begin position="1158"/>
        <end position="1179"/>
    </location>
</feature>
<feature type="helix" evidence="45">
    <location>
        <begin position="1181"/>
        <end position="1187"/>
    </location>
</feature>
<feature type="helix" evidence="45">
    <location>
        <begin position="1189"/>
        <end position="1200"/>
    </location>
</feature>
<feature type="strand" evidence="45">
    <location>
        <begin position="1203"/>
        <end position="1205"/>
    </location>
</feature>
<feature type="helix" evidence="45">
    <location>
        <begin position="1206"/>
        <end position="1222"/>
    </location>
</feature>
<feature type="turn" evidence="46">
    <location>
        <begin position="1223"/>
        <end position="1228"/>
    </location>
</feature>
<feature type="helix" evidence="45">
    <location>
        <begin position="1229"/>
        <end position="1232"/>
    </location>
</feature>
<feature type="helix" evidence="45">
    <location>
        <begin position="1234"/>
        <end position="1246"/>
    </location>
</feature>
<feature type="helix" evidence="45">
    <location>
        <begin position="1255"/>
        <end position="1271"/>
    </location>
</feature>
<feature type="helix" evidence="45">
    <location>
        <begin position="1284"/>
        <end position="1293"/>
    </location>
</feature>
<feature type="turn" evidence="45">
    <location>
        <begin position="1294"/>
        <end position="1297"/>
    </location>
</feature>
<feature type="helix" evidence="45">
    <location>
        <begin position="1301"/>
        <end position="1315"/>
    </location>
</feature>
<feature type="strand" evidence="45">
    <location>
        <begin position="1316"/>
        <end position="1319"/>
    </location>
</feature>
<feature type="helix" evidence="45">
    <location>
        <begin position="1322"/>
        <end position="1325"/>
    </location>
</feature>
<feature type="strand" evidence="45">
    <location>
        <begin position="1326"/>
        <end position="1329"/>
    </location>
</feature>
<feature type="helix" evidence="45">
    <location>
        <begin position="1330"/>
        <end position="1339"/>
    </location>
</feature>
<feature type="strand" evidence="45">
    <location>
        <begin position="1342"/>
        <end position="1345"/>
    </location>
</feature>
<feature type="helix" evidence="45">
    <location>
        <begin position="1347"/>
        <end position="1362"/>
    </location>
</feature>
<feature type="strand" evidence="45">
    <location>
        <begin position="1363"/>
        <end position="1365"/>
    </location>
</feature>
<feature type="helix" evidence="45">
    <location>
        <begin position="1372"/>
        <end position="1382"/>
    </location>
</feature>
<feature type="strand" evidence="45">
    <location>
        <begin position="1387"/>
        <end position="1389"/>
    </location>
</feature>
<feature type="strand" evidence="45">
    <location>
        <begin position="1397"/>
        <end position="1399"/>
    </location>
</feature>
<feature type="strand" evidence="45">
    <location>
        <begin position="1402"/>
        <end position="1404"/>
    </location>
</feature>
<feature type="helix" evidence="45">
    <location>
        <begin position="1405"/>
        <end position="1423"/>
    </location>
</feature>
<feature type="turn" evidence="45">
    <location>
        <begin position="1426"/>
        <end position="1428"/>
    </location>
</feature>
<feature type="strand" evidence="45">
    <location>
        <begin position="1429"/>
        <end position="1436"/>
    </location>
</feature>
<feature type="helix" evidence="45">
    <location>
        <begin position="1437"/>
        <end position="1446"/>
    </location>
</feature>
<feature type="turn" evidence="45">
    <location>
        <begin position="1447"/>
        <end position="1449"/>
    </location>
</feature>
<feature type="helix" evidence="45">
    <location>
        <begin position="1453"/>
        <end position="1466"/>
    </location>
</feature>
<feature type="helix" evidence="45">
    <location>
        <begin position="1467"/>
        <end position="1469"/>
    </location>
</feature>
<feature type="helix" evidence="45">
    <location>
        <begin position="1478"/>
        <end position="1481"/>
    </location>
</feature>
<feature type="helix" evidence="45">
    <location>
        <begin position="1483"/>
        <end position="1488"/>
    </location>
</feature>
<feature type="helix" evidence="45">
    <location>
        <begin position="1497"/>
        <end position="1507"/>
    </location>
</feature>
<feature type="helix" evidence="45">
    <location>
        <begin position="1518"/>
        <end position="1529"/>
    </location>
</feature>
<feature type="helix" evidence="45">
    <location>
        <begin position="1533"/>
        <end position="1537"/>
    </location>
</feature>
<feature type="turn" evidence="45">
    <location>
        <begin position="1538"/>
        <end position="1540"/>
    </location>
</feature>
<feature type="strand" evidence="45">
    <location>
        <begin position="1543"/>
        <end position="1545"/>
    </location>
</feature>
<feature type="helix" evidence="45">
    <location>
        <begin position="1547"/>
        <end position="1557"/>
    </location>
</feature>
<feature type="turn" evidence="45">
    <location>
        <begin position="1558"/>
        <end position="1561"/>
    </location>
</feature>
<feature type="turn" evidence="45">
    <location>
        <begin position="1568"/>
        <end position="1570"/>
    </location>
</feature>
<feature type="helix" evidence="45">
    <location>
        <begin position="1571"/>
        <end position="1583"/>
    </location>
</feature>
<feature type="helix" evidence="45">
    <location>
        <begin position="1594"/>
        <end position="1603"/>
    </location>
</feature>
<feature type="helix" evidence="45">
    <location>
        <begin position="1606"/>
        <end position="1612"/>
    </location>
</feature>
<feature type="helix" evidence="45">
    <location>
        <begin position="1618"/>
        <end position="1628"/>
    </location>
</feature>
<feature type="helix" evidence="45">
    <location>
        <begin position="1631"/>
        <end position="1633"/>
    </location>
</feature>
<feature type="helix" evidence="45">
    <location>
        <begin position="1634"/>
        <end position="1640"/>
    </location>
</feature>
<feature type="helix" evidence="46">
    <location>
        <begin position="1641"/>
        <end position="1643"/>
    </location>
</feature>
<feature type="helix" evidence="45">
    <location>
        <begin position="1644"/>
        <end position="1658"/>
    </location>
</feature>
<feature type="strand" evidence="45">
    <location>
        <begin position="1659"/>
        <end position="1661"/>
    </location>
</feature>
<feature type="helix" evidence="45">
    <location>
        <begin position="1662"/>
        <end position="1678"/>
    </location>
</feature>
<feature type="strand" evidence="45">
    <location>
        <begin position="1679"/>
        <end position="1682"/>
    </location>
</feature>
<feature type="turn" evidence="46">
    <location>
        <begin position="1687"/>
        <end position="1689"/>
    </location>
</feature>
<feature type="helix" evidence="45">
    <location>
        <begin position="1691"/>
        <end position="1708"/>
    </location>
</feature>
<feature type="helix" evidence="45">
    <location>
        <begin position="1716"/>
        <end position="1733"/>
    </location>
</feature>
<feature type="strand" evidence="44">
    <location>
        <begin position="1735"/>
        <end position="1737"/>
    </location>
</feature>
<feature type="helix" evidence="45">
    <location>
        <begin position="1740"/>
        <end position="1749"/>
    </location>
</feature>
<feature type="strand" evidence="45">
    <location>
        <begin position="1751"/>
        <end position="1754"/>
    </location>
</feature>
<feature type="turn" evidence="45">
    <location>
        <begin position="1759"/>
        <end position="1761"/>
    </location>
</feature>
<feature type="helix" evidence="45">
    <location>
        <begin position="1763"/>
        <end position="1769"/>
    </location>
</feature>
<feature type="helix" evidence="45">
    <location>
        <begin position="1772"/>
        <end position="1774"/>
    </location>
</feature>
<feature type="helix" evidence="45">
    <location>
        <begin position="1778"/>
        <end position="1791"/>
    </location>
</feature>
<feature type="strand" evidence="46">
    <location>
        <begin position="1792"/>
        <end position="1794"/>
    </location>
</feature>
<feature type="helix" evidence="45">
    <location>
        <begin position="1797"/>
        <end position="1816"/>
    </location>
</feature>
<feature type="strand" evidence="46">
    <location>
        <begin position="1817"/>
        <end position="1821"/>
    </location>
</feature>
<feature type="strand" evidence="45">
    <location>
        <begin position="1826"/>
        <end position="1828"/>
    </location>
</feature>
<feature type="helix" evidence="45">
    <location>
        <begin position="1834"/>
        <end position="1842"/>
    </location>
</feature>
<feature type="turn" evidence="45">
    <location>
        <begin position="1843"/>
        <end position="1846"/>
    </location>
</feature>
<feature type="helix" evidence="45">
    <location>
        <begin position="1847"/>
        <end position="1849"/>
    </location>
</feature>
<feature type="turn" evidence="45">
    <location>
        <begin position="1850"/>
        <end position="1852"/>
    </location>
</feature>
<feature type="helix" evidence="45">
    <location>
        <begin position="1859"/>
        <end position="1874"/>
    </location>
</feature>
<feature type="strand" evidence="45">
    <location>
        <begin position="1876"/>
        <end position="1878"/>
    </location>
</feature>
<feature type="helix" evidence="46">
    <location>
        <begin position="1880"/>
        <end position="1882"/>
    </location>
</feature>
<feature type="helix" evidence="45">
    <location>
        <begin position="1883"/>
        <end position="1892"/>
    </location>
</feature>
<feature type="turn" evidence="45">
    <location>
        <begin position="1893"/>
        <end position="1895"/>
    </location>
</feature>
<feature type="helix" evidence="45">
    <location>
        <begin position="1900"/>
        <end position="1915"/>
    </location>
</feature>
<feature type="helix" evidence="45">
    <location>
        <begin position="1921"/>
        <end position="1930"/>
    </location>
</feature>
<feature type="helix" evidence="45">
    <location>
        <begin position="1936"/>
        <end position="1938"/>
    </location>
</feature>
<feature type="helix" evidence="45">
    <location>
        <begin position="1939"/>
        <end position="1957"/>
    </location>
</feature>
<feature type="strand" evidence="45">
    <location>
        <begin position="1960"/>
        <end position="1962"/>
    </location>
</feature>
<feature type="helix" evidence="45">
    <location>
        <begin position="1965"/>
        <end position="1974"/>
    </location>
</feature>
<feature type="helix" evidence="45">
    <location>
        <begin position="1983"/>
        <end position="1987"/>
    </location>
</feature>
<feature type="turn" evidence="45">
    <location>
        <begin position="1988"/>
        <end position="1991"/>
    </location>
</feature>
<feature type="turn" evidence="46">
    <location>
        <begin position="1997"/>
        <end position="1999"/>
    </location>
</feature>
<feature type="helix" evidence="45">
    <location>
        <begin position="2002"/>
        <end position="2014"/>
    </location>
</feature>
<feature type="strand" evidence="46">
    <location>
        <begin position="2016"/>
        <end position="2019"/>
    </location>
</feature>
<feature type="helix" evidence="45">
    <location>
        <begin position="2025"/>
        <end position="2042"/>
    </location>
</feature>
<feature type="helix" evidence="45">
    <location>
        <begin position="2091"/>
        <end position="2106"/>
    </location>
</feature>
<feature type="strand" evidence="46">
    <location>
        <begin position="2107"/>
        <end position="2109"/>
    </location>
</feature>
<feature type="helix" evidence="45">
    <location>
        <begin position="2117"/>
        <end position="2128"/>
    </location>
</feature>
<feature type="helix" evidence="46">
    <location>
        <begin position="2140"/>
        <end position="2143"/>
    </location>
</feature>
<feature type="helix" evidence="46">
    <location>
        <begin position="2144"/>
        <end position="2147"/>
    </location>
</feature>
<feature type="helix" evidence="45">
    <location>
        <begin position="2156"/>
        <end position="2172"/>
    </location>
</feature>
<feature type="strand" evidence="45">
    <location>
        <begin position="2173"/>
        <end position="2175"/>
    </location>
</feature>
<feature type="turn" evidence="45">
    <location>
        <begin position="2176"/>
        <end position="2178"/>
    </location>
</feature>
<feature type="turn" evidence="45">
    <location>
        <begin position="2180"/>
        <end position="2183"/>
    </location>
</feature>
<feature type="helix" evidence="45">
    <location>
        <begin position="2184"/>
        <end position="2195"/>
    </location>
</feature>
<feature type="helix" evidence="45">
    <location>
        <begin position="2204"/>
        <end position="2216"/>
    </location>
</feature>
<feature type="strand" evidence="45">
    <location>
        <begin position="2222"/>
        <end position="2225"/>
    </location>
</feature>
<feature type="helix" evidence="45">
    <location>
        <begin position="2229"/>
        <end position="2244"/>
    </location>
</feature>
<feature type="helix" evidence="45">
    <location>
        <begin position="2252"/>
        <end position="2266"/>
    </location>
</feature>
<feature type="helix" evidence="46">
    <location>
        <begin position="2268"/>
        <end position="2270"/>
    </location>
</feature>
<feature type="helix" evidence="45">
    <location>
        <begin position="2276"/>
        <end position="2289"/>
    </location>
</feature>
<feature type="turn" evidence="45">
    <location>
        <begin position="2290"/>
        <end position="2293"/>
    </location>
</feature>
<feature type="strand" evidence="45">
    <location>
        <begin position="2294"/>
        <end position="2297"/>
    </location>
</feature>
<feature type="helix" evidence="45">
    <location>
        <begin position="2303"/>
        <end position="2320"/>
    </location>
</feature>
<feature type="helix" evidence="45">
    <location>
        <begin position="2329"/>
        <end position="2341"/>
    </location>
</feature>
<feature type="helix" evidence="45">
    <location>
        <begin position="2346"/>
        <end position="2360"/>
    </location>
</feature>
<feature type="helix" evidence="45">
    <location>
        <begin position="2370"/>
        <end position="2377"/>
    </location>
</feature>
<feature type="helix" evidence="45">
    <location>
        <begin position="2378"/>
        <end position="2381"/>
    </location>
</feature>
<feature type="helix" evidence="45">
    <location>
        <begin position="2382"/>
        <end position="2385"/>
    </location>
</feature>
<feature type="helix" evidence="45">
    <location>
        <begin position="2388"/>
        <end position="2403"/>
    </location>
</feature>
<feature type="helix" evidence="45">
    <location>
        <begin position="2413"/>
        <end position="2423"/>
    </location>
</feature>
<feature type="strand" evidence="44">
    <location>
        <begin position="2425"/>
        <end position="2427"/>
    </location>
</feature>
<feature type="helix" evidence="45">
    <location>
        <begin position="2429"/>
        <end position="2442"/>
    </location>
</feature>
<feature type="helix" evidence="45">
    <location>
        <begin position="2447"/>
        <end position="2455"/>
    </location>
</feature>
<feature type="helix" evidence="46">
    <location>
        <begin position="2460"/>
        <end position="2463"/>
    </location>
</feature>
<feature type="helix" evidence="45">
    <location>
        <begin position="2469"/>
        <end position="2476"/>
    </location>
</feature>
<feature type="helix" evidence="45">
    <location>
        <begin position="2477"/>
        <end position="2479"/>
    </location>
</feature>
<feature type="strand" evidence="46">
    <location>
        <begin position="2488"/>
        <end position="2491"/>
    </location>
</feature>
<feature type="turn" evidence="45">
    <location>
        <begin position="2497"/>
        <end position="2499"/>
    </location>
</feature>
<feature type="helix" evidence="45">
    <location>
        <begin position="2500"/>
        <end position="2502"/>
    </location>
</feature>
<feature type="helix" evidence="45">
    <location>
        <begin position="2519"/>
        <end position="2533"/>
    </location>
</feature>
<feature type="helix" evidence="45">
    <location>
        <begin position="2538"/>
        <end position="2549"/>
    </location>
</feature>
<feature type="helix" evidence="45">
    <location>
        <begin position="2553"/>
        <end position="2567"/>
    </location>
</feature>
<feature type="helix" evidence="45">
    <location>
        <begin position="2568"/>
        <end position="2570"/>
    </location>
</feature>
<feature type="helix" evidence="45">
    <location>
        <begin position="2576"/>
        <end position="2587"/>
    </location>
</feature>
<feature type="helix" evidence="45">
    <location>
        <begin position="2590"/>
        <end position="2595"/>
    </location>
</feature>
<feature type="helix" evidence="45">
    <location>
        <begin position="2602"/>
        <end position="2610"/>
    </location>
</feature>
<feature type="turn" evidence="45">
    <location>
        <begin position="2611"/>
        <end position="2613"/>
    </location>
</feature>
<feature type="strand" evidence="45">
    <location>
        <begin position="2614"/>
        <end position="2616"/>
    </location>
</feature>
<feature type="strand" evidence="45">
    <location>
        <begin position="2621"/>
        <end position="2623"/>
    </location>
</feature>
<feature type="helix" evidence="45">
    <location>
        <begin position="2624"/>
        <end position="2626"/>
    </location>
</feature>
<feature type="strand" evidence="45">
    <location>
        <begin position="2629"/>
        <end position="2631"/>
    </location>
</feature>
<feature type="helix" evidence="45">
    <location>
        <begin position="2633"/>
        <end position="2641"/>
    </location>
</feature>
<feature type="turn" evidence="45">
    <location>
        <begin position="2642"/>
        <end position="2645"/>
    </location>
</feature>
<feature type="turn" evidence="44">
    <location>
        <begin position="2652"/>
        <end position="2654"/>
    </location>
</feature>
<feature type="helix" evidence="45">
    <location>
        <begin position="2655"/>
        <end position="2668"/>
    </location>
</feature>
<feature type="helix" evidence="45">
    <location>
        <begin position="2672"/>
        <end position="2682"/>
    </location>
</feature>
<feature type="helix" evidence="45">
    <location>
        <begin position="2686"/>
        <end position="2697"/>
    </location>
</feature>
<feature type="helix" evidence="45">
    <location>
        <begin position="2700"/>
        <end position="2715"/>
    </location>
</feature>
<feature type="strand" evidence="45">
    <location>
        <begin position="2716"/>
        <end position="2718"/>
    </location>
</feature>
<feature type="helix" evidence="45">
    <location>
        <begin position="2721"/>
        <end position="2723"/>
    </location>
</feature>
<feature type="helix" evidence="45">
    <location>
        <begin position="2725"/>
        <end position="2739"/>
    </location>
</feature>
<feature type="helix" evidence="45">
    <location>
        <begin position="2743"/>
        <end position="2751"/>
    </location>
</feature>
<feature type="turn" evidence="45">
    <location>
        <begin position="2752"/>
        <end position="2754"/>
    </location>
</feature>
<feature type="helix" evidence="45">
    <location>
        <begin position="2758"/>
        <end position="2760"/>
    </location>
</feature>
<feature type="strand" evidence="44">
    <location>
        <begin position="2762"/>
        <end position="2765"/>
    </location>
</feature>
<feature type="turn" evidence="46">
    <location>
        <begin position="2769"/>
        <end position="2772"/>
    </location>
</feature>
<feature type="helix" evidence="45">
    <location>
        <begin position="2773"/>
        <end position="2783"/>
    </location>
</feature>
<feature type="helix" evidence="45">
    <location>
        <begin position="2789"/>
        <end position="2805"/>
    </location>
</feature>
<feature type="strand" evidence="45">
    <location>
        <begin position="2806"/>
        <end position="2808"/>
    </location>
</feature>
<feature type="helix" evidence="45">
    <location>
        <begin position="2813"/>
        <end position="2830"/>
    </location>
</feature>
<feature type="helix" evidence="45">
    <location>
        <begin position="2838"/>
        <end position="2863"/>
    </location>
</feature>
<feature type="helix" evidence="45">
    <location>
        <begin position="2865"/>
        <end position="2867"/>
    </location>
</feature>
<feature type="turn" evidence="45">
    <location>
        <begin position="2870"/>
        <end position="2872"/>
    </location>
</feature>
<feature type="helix" evidence="45">
    <location>
        <begin position="2874"/>
        <end position="2885"/>
    </location>
</feature>
<feature type="helix" evidence="45">
    <location>
        <begin position="2895"/>
        <end position="2915"/>
    </location>
</feature>
<feature type="helix" evidence="45">
    <location>
        <begin position="2921"/>
        <end position="2923"/>
    </location>
</feature>
<feature type="turn" evidence="46">
    <location>
        <begin position="2936"/>
        <end position="2939"/>
    </location>
</feature>
<feature type="helix" evidence="45">
    <location>
        <begin position="2943"/>
        <end position="2956"/>
    </location>
</feature>
<feature type="helix" evidence="45">
    <location>
        <begin position="2960"/>
        <end position="2966"/>
    </location>
</feature>
<feature type="turn" evidence="46">
    <location>
        <begin position="2969"/>
        <end position="2972"/>
    </location>
</feature>
<feature type="helix" evidence="45">
    <location>
        <begin position="2980"/>
        <end position="2991"/>
    </location>
</feature>
<feature type="helix" evidence="45">
    <location>
        <begin position="2996"/>
        <end position="2998"/>
    </location>
</feature>
<feature type="helix" evidence="45">
    <location>
        <begin position="2999"/>
        <end position="3006"/>
    </location>
</feature>
<feature type="strand" evidence="46">
    <location>
        <begin position="3011"/>
        <end position="3014"/>
    </location>
</feature>
<feature type="helix" evidence="45">
    <location>
        <begin position="3017"/>
        <end position="3032"/>
    </location>
</feature>
<feature type="helix" evidence="45">
    <location>
        <begin position="3037"/>
        <end position="3047"/>
    </location>
</feature>
<feature type="turn" evidence="45">
    <location>
        <begin position="3048"/>
        <end position="3050"/>
    </location>
</feature>
<feature type="helix" evidence="45">
    <location>
        <begin position="3054"/>
        <end position="3068"/>
    </location>
</feature>
<feature type="helix" evidence="45">
    <location>
        <begin position="3077"/>
        <end position="3090"/>
    </location>
</feature>
<feature type="strand" evidence="45">
    <location>
        <begin position="3094"/>
        <end position="3096"/>
    </location>
</feature>
<feature type="helix" evidence="45">
    <location>
        <begin position="3098"/>
        <end position="3108"/>
    </location>
</feature>
<feature type="helix" evidence="45">
    <location>
        <begin position="3116"/>
        <end position="3122"/>
    </location>
</feature>
<feature type="helix" evidence="45">
    <location>
        <begin position="3130"/>
        <end position="3136"/>
    </location>
</feature>
<feature type="helix" evidence="45">
    <location>
        <begin position="3137"/>
        <end position="3141"/>
    </location>
</feature>
<feature type="turn" evidence="45">
    <location>
        <begin position="3142"/>
        <end position="3145"/>
    </location>
</feature>
<feature type="strand" evidence="45">
    <location>
        <begin position="3146"/>
        <end position="3148"/>
    </location>
</feature>
<feature type="helix" evidence="45">
    <location>
        <begin position="3152"/>
        <end position="3162"/>
    </location>
</feature>
<feature type="helix" evidence="45">
    <location>
        <begin position="3164"/>
        <end position="3179"/>
    </location>
</feature>
<feature type="helix" evidence="45">
    <location>
        <begin position="3203"/>
        <end position="3217"/>
    </location>
</feature>
<feature type="helix" evidence="45">
    <location>
        <begin position="3220"/>
        <end position="3236"/>
    </location>
</feature>
<feature type="helix" evidence="45">
    <location>
        <begin position="3241"/>
        <end position="3262"/>
    </location>
</feature>
<feature type="strand" evidence="44">
    <location>
        <begin position="3264"/>
        <end position="3266"/>
    </location>
</feature>
<feature type="helix" evidence="45">
    <location>
        <begin position="3274"/>
        <end position="3286"/>
    </location>
</feature>
<feature type="turn" evidence="45">
    <location>
        <begin position="3289"/>
        <end position="3291"/>
    </location>
</feature>
<feature type="helix" evidence="45">
    <location>
        <begin position="3292"/>
        <end position="3301"/>
    </location>
</feature>
<feature type="strand" evidence="44">
    <location>
        <begin position="3306"/>
        <end position="3308"/>
    </location>
</feature>
<feature type="helix" evidence="45">
    <location>
        <begin position="3309"/>
        <end position="3326"/>
    </location>
</feature>
<feature type="strand" evidence="45">
    <location>
        <begin position="3330"/>
        <end position="3332"/>
    </location>
</feature>
<feature type="helix" evidence="45">
    <location>
        <begin position="3334"/>
        <end position="3337"/>
    </location>
</feature>
<feature type="helix" evidence="45">
    <location>
        <begin position="3339"/>
        <end position="3342"/>
    </location>
</feature>
<feature type="helix" evidence="45">
    <location>
        <begin position="3344"/>
        <end position="3347"/>
    </location>
</feature>
<feature type="turn" evidence="45">
    <location>
        <begin position="3355"/>
        <end position="3359"/>
    </location>
</feature>
<feature type="strand" evidence="45">
    <location>
        <begin position="3370"/>
        <end position="3374"/>
    </location>
</feature>
<feature type="strand" evidence="45">
    <location>
        <begin position="3376"/>
        <end position="3382"/>
    </location>
</feature>
<feature type="strand" evidence="45">
    <location>
        <begin position="3387"/>
        <end position="3395"/>
    </location>
</feature>
<feature type="strand" evidence="45">
    <location>
        <begin position="3400"/>
        <end position="3408"/>
    </location>
</feature>
<feature type="helix" evidence="45">
    <location>
        <begin position="3413"/>
        <end position="3425"/>
    </location>
</feature>
<feature type="helix" evidence="45">
    <location>
        <begin position="3426"/>
        <end position="3428"/>
    </location>
</feature>
<feature type="helix" evidence="45">
    <location>
        <begin position="3429"/>
        <end position="3432"/>
    </location>
</feature>
<feature type="helix" evidence="45">
    <location>
        <begin position="3434"/>
        <end position="3438"/>
    </location>
</feature>
<feature type="strand" evidence="45">
    <location>
        <begin position="3448"/>
        <end position="3454"/>
    </location>
</feature>
<feature type="strand" evidence="45">
    <location>
        <begin position="3456"/>
        <end position="3459"/>
    </location>
</feature>
<feature type="strand" evidence="45">
    <location>
        <begin position="3462"/>
        <end position="3466"/>
    </location>
</feature>
<feature type="helix" evidence="45">
    <location>
        <begin position="3467"/>
        <end position="3477"/>
    </location>
</feature>
<feature type="helix" evidence="45">
    <location>
        <begin position="3484"/>
        <end position="3495"/>
    </location>
</feature>
<feature type="strand" evidence="46">
    <location>
        <begin position="3499"/>
        <end position="3501"/>
    </location>
</feature>
<feature type="helix" evidence="45">
    <location>
        <begin position="3506"/>
        <end position="3520"/>
    </location>
</feature>
<feature type="helix" evidence="45">
    <location>
        <begin position="3526"/>
        <end position="3534"/>
    </location>
</feature>
<feature type="strand" evidence="45">
    <location>
        <begin position="3535"/>
        <end position="3537"/>
    </location>
</feature>
<feature type="helix" evidence="45">
    <location>
        <begin position="3538"/>
        <end position="3560"/>
    </location>
</feature>
<feature type="helix" evidence="45">
    <location>
        <begin position="3561"/>
        <end position="3563"/>
    </location>
</feature>
<feature type="strand" evidence="45">
    <location>
        <begin position="3571"/>
        <end position="3575"/>
    </location>
</feature>
<feature type="turn" evidence="45">
    <location>
        <begin position="3576"/>
        <end position="3578"/>
    </location>
</feature>
<feature type="strand" evidence="45">
    <location>
        <begin position="3581"/>
        <end position="3584"/>
    </location>
</feature>
<feature type="turn" evidence="46">
    <location>
        <begin position="3593"/>
        <end position="3596"/>
    </location>
</feature>
<feature type="helix" evidence="46">
    <location>
        <begin position="3597"/>
        <end position="3600"/>
    </location>
</feature>
<feature type="strand" evidence="45">
    <location>
        <begin position="3601"/>
        <end position="3605"/>
    </location>
</feature>
<feature type="strand" evidence="45">
    <location>
        <begin position="3619"/>
        <end position="3622"/>
    </location>
</feature>
<feature type="helix" evidence="45">
    <location>
        <begin position="3626"/>
        <end position="3632"/>
    </location>
</feature>
<feature type="helix" evidence="45">
    <location>
        <begin position="3635"/>
        <end position="3639"/>
    </location>
</feature>
<feature type="helix" evidence="45">
    <location>
        <begin position="3641"/>
        <end position="3653"/>
    </location>
</feature>
<feature type="strand" evidence="45">
    <location>
        <begin position="3656"/>
        <end position="3658"/>
    </location>
</feature>
<feature type="helix" evidence="45">
    <location>
        <begin position="3659"/>
        <end position="3677"/>
    </location>
</feature>
<feature type="helix" evidence="45">
    <location>
        <begin position="3686"/>
        <end position="3704"/>
    </location>
</feature>
<feature type="turn" evidence="45">
    <location>
        <begin position="3705"/>
        <end position="3707"/>
    </location>
</feature>
<feature type="strand" evidence="45">
    <location>
        <begin position="3716"/>
        <end position="3718"/>
    </location>
</feature>
<feature type="helix" evidence="45">
    <location>
        <begin position="3719"/>
        <end position="3726"/>
    </location>
</feature>
<feature type="helix" evidence="45">
    <location>
        <begin position="3730"/>
        <end position="3733"/>
    </location>
</feature>
<feature type="helix" evidence="46">
    <location>
        <begin position="3738"/>
        <end position="3740"/>
    </location>
</feature>
<organism>
    <name type="scientific">Saccharomyces cerevisiae (strain ATCC 204508 / S288c)</name>
    <name type="common">Baker's yeast</name>
    <dbReference type="NCBI Taxonomy" id="559292"/>
    <lineage>
        <taxon>Eukaryota</taxon>
        <taxon>Fungi</taxon>
        <taxon>Dikarya</taxon>
        <taxon>Ascomycota</taxon>
        <taxon>Saccharomycotina</taxon>
        <taxon>Saccharomycetes</taxon>
        <taxon>Saccharomycetales</taxon>
        <taxon>Saccharomycetaceae</taxon>
        <taxon>Saccharomyces</taxon>
    </lineage>
</organism>
<keyword id="KW-0002">3D-structure</keyword>
<keyword id="KW-0007">Acetylation</keyword>
<keyword id="KW-0010">Activator</keyword>
<keyword id="KW-0156">Chromatin regulator</keyword>
<keyword id="KW-0903">Direct protein sequencing</keyword>
<keyword id="KW-0539">Nucleus</keyword>
<keyword id="KW-0597">Phosphoprotein</keyword>
<keyword id="KW-1185">Reference proteome</keyword>
<keyword id="KW-0677">Repeat</keyword>
<keyword id="KW-0804">Transcription</keyword>
<keyword id="KW-0805">Transcription regulation</keyword>
<dbReference type="EMBL" id="U00060">
    <property type="protein sequence ID" value="AAB68923.1"/>
    <property type="molecule type" value="Genomic_DNA"/>
</dbReference>
<dbReference type="EMBL" id="BK006934">
    <property type="protein sequence ID" value="DAA06793.1"/>
    <property type="molecule type" value="Genomic_DNA"/>
</dbReference>
<dbReference type="PIR" id="S46715">
    <property type="entry name" value="S46715"/>
</dbReference>
<dbReference type="RefSeq" id="NP_011967.1">
    <property type="nucleotide sequence ID" value="NM_001179229.1"/>
</dbReference>
<dbReference type="PDB" id="5OJS">
    <property type="method" value="EM"/>
    <property type="resolution" value="3.70 A"/>
    <property type="chains" value="T=1-3744"/>
</dbReference>
<dbReference type="PDB" id="5Y81">
    <property type="method" value="EM"/>
    <property type="resolution" value="4.70 A"/>
    <property type="chains" value="A=1-2627, B=2630-3744"/>
</dbReference>
<dbReference type="PDB" id="6IG9">
    <property type="method" value="EM"/>
    <property type="resolution" value="4.60 A"/>
    <property type="chains" value="T=1-3744"/>
</dbReference>
<dbReference type="PDB" id="6T9I">
    <property type="method" value="EM"/>
    <property type="resolution" value="3.90 A"/>
    <property type="chains" value="T=1-3744"/>
</dbReference>
<dbReference type="PDB" id="6T9J">
    <property type="method" value="EM"/>
    <property type="resolution" value="3.40 A"/>
    <property type="chains" value="T=1-3744"/>
</dbReference>
<dbReference type="PDB" id="7VVY">
    <property type="method" value="EM"/>
    <property type="resolution" value="3.10 A"/>
    <property type="chains" value="L=1-3744"/>
</dbReference>
<dbReference type="PDB" id="7VVZ">
    <property type="method" value="EM"/>
    <property type="resolution" value="8.80 A"/>
    <property type="chains" value="L=1-3744"/>
</dbReference>
<dbReference type="PDB" id="7YFN">
    <property type="method" value="EM"/>
    <property type="resolution" value="3.80 A"/>
    <property type="chains" value="T=1-3744"/>
</dbReference>
<dbReference type="PDB" id="7YFP">
    <property type="method" value="EM"/>
    <property type="resolution" value="4.00 A"/>
    <property type="chains" value="T=1-3744"/>
</dbReference>
<dbReference type="PDB" id="8ESC">
    <property type="method" value="EM"/>
    <property type="resolution" value="3.10 A"/>
    <property type="chains" value="Z=1-3744"/>
</dbReference>
<dbReference type="PDBsum" id="5OJS"/>
<dbReference type="PDBsum" id="5Y81"/>
<dbReference type="PDBsum" id="6IG9"/>
<dbReference type="PDBsum" id="6T9I"/>
<dbReference type="PDBsum" id="6T9J"/>
<dbReference type="PDBsum" id="7VVY"/>
<dbReference type="PDBsum" id="7VVZ"/>
<dbReference type="PDBsum" id="7YFN"/>
<dbReference type="PDBsum" id="7YFP"/>
<dbReference type="PDBsum" id="8ESC"/>
<dbReference type="EMDB" id="EMD-10412"/>
<dbReference type="EMDB" id="EMD-10413"/>
<dbReference type="EMDB" id="EMD-28575"/>
<dbReference type="EMDB" id="EMD-32149"/>
<dbReference type="EMDB" id="EMD-32150"/>
<dbReference type="EMDB" id="EMD-33794"/>
<dbReference type="EMDB" id="EMD-33796"/>
<dbReference type="EMDB" id="EMD-3824"/>
<dbReference type="EMDB" id="EMD-6816"/>
<dbReference type="EMDB" id="EMD-9664"/>
<dbReference type="SMR" id="P38811"/>
<dbReference type="BioGRID" id="36532">
    <property type="interactions" value="284"/>
</dbReference>
<dbReference type="ComplexPortal" id="CPX-3155">
    <property type="entry name" value="NuA4 histone acetyltransferase complex"/>
</dbReference>
<dbReference type="ComplexPortal" id="CPX-656">
    <property type="entry name" value="SAGA complex"/>
</dbReference>
<dbReference type="ComplexPortal" id="CPX-675">
    <property type="entry name" value="SLIK (SAGA-like) complex"/>
</dbReference>
<dbReference type="DIP" id="DIP-805N"/>
<dbReference type="FunCoup" id="P38811">
    <property type="interactions" value="1461"/>
</dbReference>
<dbReference type="IntAct" id="P38811">
    <property type="interactions" value="78"/>
</dbReference>
<dbReference type="MINT" id="P38811"/>
<dbReference type="STRING" id="4932.YHR099W"/>
<dbReference type="GlyGen" id="P38811">
    <property type="glycosylation" value="1 site"/>
</dbReference>
<dbReference type="iPTMnet" id="P38811"/>
<dbReference type="PaxDb" id="4932-YHR099W"/>
<dbReference type="PeptideAtlas" id="P38811"/>
<dbReference type="EnsemblFungi" id="YHR099W_mRNA">
    <property type="protein sequence ID" value="YHR099W"/>
    <property type="gene ID" value="YHR099W"/>
</dbReference>
<dbReference type="GeneID" id="856499"/>
<dbReference type="KEGG" id="sce:YHR099W"/>
<dbReference type="AGR" id="SGD:S000001141"/>
<dbReference type="SGD" id="S000001141">
    <property type="gene designation" value="TRA1"/>
</dbReference>
<dbReference type="VEuPathDB" id="FungiDB:YHR099W"/>
<dbReference type="eggNOG" id="KOG0889">
    <property type="taxonomic scope" value="Eukaryota"/>
</dbReference>
<dbReference type="GeneTree" id="ENSGT00390000017961"/>
<dbReference type="HOGENOM" id="CLU_000129_1_0_1"/>
<dbReference type="InParanoid" id="P38811"/>
<dbReference type="OMA" id="CLDLYGQ"/>
<dbReference type="OrthoDB" id="5570127at2759"/>
<dbReference type="BioCyc" id="YEAST:G3O-31144-MONOMER"/>
<dbReference type="Reactome" id="R-SCE-5689880">
    <property type="pathway name" value="Ub-specific processing proteases"/>
</dbReference>
<dbReference type="BioGRID-ORCS" id="856499">
    <property type="hits" value="0 hits in 13 CRISPR screens"/>
</dbReference>
<dbReference type="PRO" id="PR:P38811"/>
<dbReference type="Proteomes" id="UP000002311">
    <property type="component" value="Chromosome VIII"/>
</dbReference>
<dbReference type="RNAct" id="P38811">
    <property type="molecule type" value="protein"/>
</dbReference>
<dbReference type="GO" id="GO:0035267">
    <property type="term" value="C:NuA4 histone acetyltransferase complex"/>
    <property type="evidence" value="ECO:0000314"/>
    <property type="project" value="SGD"/>
</dbReference>
<dbReference type="GO" id="GO:0005634">
    <property type="term" value="C:nucleus"/>
    <property type="evidence" value="ECO:0000314"/>
    <property type="project" value="SGD"/>
</dbReference>
<dbReference type="GO" id="GO:0000124">
    <property type="term" value="C:SAGA complex"/>
    <property type="evidence" value="ECO:0000314"/>
    <property type="project" value="SGD"/>
</dbReference>
<dbReference type="GO" id="GO:0046695">
    <property type="term" value="C:SLIK (SAGA-like) complex"/>
    <property type="evidence" value="ECO:0000314"/>
    <property type="project" value="SGD"/>
</dbReference>
<dbReference type="GO" id="GO:0110078">
    <property type="term" value="C:TTT Hsp90 cochaperone complex"/>
    <property type="evidence" value="ECO:0007005"/>
    <property type="project" value="SGD"/>
</dbReference>
<dbReference type="GO" id="GO:0006281">
    <property type="term" value="P:DNA repair"/>
    <property type="evidence" value="ECO:0000314"/>
    <property type="project" value="SGD"/>
</dbReference>
<dbReference type="GO" id="GO:0140861">
    <property type="term" value="P:DNA repair-dependent chromatin remodeling"/>
    <property type="evidence" value="ECO:0000318"/>
    <property type="project" value="GO_Central"/>
</dbReference>
<dbReference type="GO" id="GO:0006351">
    <property type="term" value="P:DNA-templated transcription"/>
    <property type="evidence" value="ECO:0000303"/>
    <property type="project" value="ComplexPortal"/>
</dbReference>
<dbReference type="GO" id="GO:0045944">
    <property type="term" value="P:positive regulation of transcription by RNA polymerase II"/>
    <property type="evidence" value="ECO:0000315"/>
    <property type="project" value="SGD"/>
</dbReference>
<dbReference type="GO" id="GO:0006355">
    <property type="term" value="P:regulation of DNA-templated transcription"/>
    <property type="evidence" value="ECO:0000318"/>
    <property type="project" value="GO_Central"/>
</dbReference>
<dbReference type="GO" id="GO:0006357">
    <property type="term" value="P:regulation of transcription by RNA polymerase II"/>
    <property type="evidence" value="ECO:0000314"/>
    <property type="project" value="ComplexPortal"/>
</dbReference>
<dbReference type="CDD" id="cd05163">
    <property type="entry name" value="PIKK_TRRAP"/>
    <property type="match status" value="1"/>
</dbReference>
<dbReference type="FunFam" id="1.10.1070.11:FF:000044">
    <property type="entry name" value="NuA4 histone acetyltransferase subunit"/>
    <property type="match status" value="1"/>
</dbReference>
<dbReference type="Gene3D" id="1.10.1070.11">
    <property type="entry name" value="Phosphatidylinositol 3-/4-kinase, catalytic domain"/>
    <property type="match status" value="1"/>
</dbReference>
<dbReference type="InterPro" id="IPR016024">
    <property type="entry name" value="ARM-type_fold"/>
</dbReference>
<dbReference type="InterPro" id="IPR050517">
    <property type="entry name" value="DDR_Repair_Kinase"/>
</dbReference>
<dbReference type="InterPro" id="IPR003152">
    <property type="entry name" value="FATC_dom"/>
</dbReference>
<dbReference type="InterPro" id="IPR011009">
    <property type="entry name" value="Kinase-like_dom_sf"/>
</dbReference>
<dbReference type="InterPro" id="IPR000403">
    <property type="entry name" value="PI3/4_kinase_cat_dom"/>
</dbReference>
<dbReference type="InterPro" id="IPR036940">
    <property type="entry name" value="PI3/4_kinase_cat_sf"/>
</dbReference>
<dbReference type="InterPro" id="IPR003151">
    <property type="entry name" value="PIK-rel_kinase_FAT"/>
</dbReference>
<dbReference type="InterPro" id="IPR014009">
    <property type="entry name" value="PIK_FAT"/>
</dbReference>
<dbReference type="InterPro" id="IPR046807">
    <property type="entry name" value="Tra1_central"/>
</dbReference>
<dbReference type="InterPro" id="IPR046805">
    <property type="entry name" value="Tra1_ring"/>
</dbReference>
<dbReference type="PANTHER" id="PTHR11139">
    <property type="entry name" value="ATAXIA TELANGIECTASIA MUTATED ATM -RELATED"/>
    <property type="match status" value="1"/>
</dbReference>
<dbReference type="PANTHER" id="PTHR11139:SF1">
    <property type="entry name" value="TRANSFORMATION_TRANSCRIPTION DOMAIN-ASSOCIATED PROTEIN"/>
    <property type="match status" value="1"/>
</dbReference>
<dbReference type="Pfam" id="PF02259">
    <property type="entry name" value="FAT"/>
    <property type="match status" value="1"/>
</dbReference>
<dbReference type="Pfam" id="PF00454">
    <property type="entry name" value="PI3_PI4_kinase"/>
    <property type="match status" value="1"/>
</dbReference>
<dbReference type="Pfam" id="PF20175">
    <property type="entry name" value="Tra1_central"/>
    <property type="match status" value="1"/>
</dbReference>
<dbReference type="Pfam" id="PF20206">
    <property type="entry name" value="Tra1_ring"/>
    <property type="match status" value="1"/>
</dbReference>
<dbReference type="SMART" id="SM00146">
    <property type="entry name" value="PI3Kc"/>
    <property type="match status" value="1"/>
</dbReference>
<dbReference type="SUPFAM" id="SSF48371">
    <property type="entry name" value="ARM repeat"/>
    <property type="match status" value="3"/>
</dbReference>
<dbReference type="SUPFAM" id="SSF56112">
    <property type="entry name" value="Protein kinase-like (PK-like)"/>
    <property type="match status" value="1"/>
</dbReference>
<dbReference type="PROSITE" id="PS51189">
    <property type="entry name" value="FAT"/>
    <property type="match status" value="1"/>
</dbReference>
<dbReference type="PROSITE" id="PS51190">
    <property type="entry name" value="FATC"/>
    <property type="match status" value="1"/>
</dbReference>
<dbReference type="PROSITE" id="PS50290">
    <property type="entry name" value="PI3_4_KINASE_3"/>
    <property type="match status" value="1"/>
</dbReference>
<protein>
    <recommendedName>
        <fullName evidence="29">SAGA complex/NuA4 acetyltransferase complex subunit TRA1</fullName>
    </recommendedName>
    <alternativeName>
        <fullName>Transcription-associated protein 1</fullName>
    </alternativeName>
    <alternativeName>
        <fullName>p400 kDa component of SAGA</fullName>
    </alternativeName>
</protein>
<gene>
    <name evidence="27 28" type="primary">TRA1</name>
    <name evidence="31" type="ordered locus">YHR099W</name>
</gene>